<dbReference type="EMBL" id="Y13467">
    <property type="protein sequence ID" value="CAA73867.1"/>
    <property type="status" value="ALT_FRAME"/>
    <property type="molecule type" value="mRNA"/>
</dbReference>
<dbReference type="EMBL" id="AF055994">
    <property type="protein sequence ID" value="AAC39854.1"/>
    <property type="status" value="ALT_FRAME"/>
    <property type="molecule type" value="mRNA"/>
</dbReference>
<dbReference type="EMBL" id="CH471152">
    <property type="protein sequence ID" value="EAW60575.1"/>
    <property type="molecule type" value="Genomic_DNA"/>
</dbReference>
<dbReference type="EMBL" id="BC006517">
    <property type="protein sequence ID" value="AAH06517.1"/>
    <property type="status" value="ALT_TERM"/>
    <property type="molecule type" value="mRNA"/>
</dbReference>
<dbReference type="EMBL" id="BC060758">
    <property type="protein sequence ID" value="AAH60758.1"/>
    <property type="molecule type" value="mRNA"/>
</dbReference>
<dbReference type="EMBL" id="BC131783">
    <property type="protein sequence ID" value="AAI31784.1"/>
    <property type="molecule type" value="mRNA"/>
</dbReference>
<dbReference type="EMBL" id="AF283812">
    <property type="protein sequence ID" value="AAF98352.1"/>
    <property type="molecule type" value="mRNA"/>
</dbReference>
<dbReference type="EMBL" id="L40366">
    <property type="protein sequence ID" value="AAC41736.1"/>
    <property type="molecule type" value="mRNA"/>
</dbReference>
<dbReference type="CCDS" id="CCDS11336.1">
    <molecule id="Q15648-1"/>
</dbReference>
<dbReference type="RefSeq" id="NP_004765.2">
    <molecule id="Q15648-1"/>
    <property type="nucleotide sequence ID" value="NM_004774.3"/>
</dbReference>
<dbReference type="PDB" id="1RJK">
    <property type="method" value="X-ray"/>
    <property type="resolution" value="1.99 A"/>
    <property type="chains" value="C=640-652"/>
</dbReference>
<dbReference type="PDB" id="1RK3">
    <property type="method" value="X-ray"/>
    <property type="resolution" value="2.20 A"/>
    <property type="chains" value="C=640-652"/>
</dbReference>
<dbReference type="PDB" id="1RKG">
    <property type="method" value="X-ray"/>
    <property type="resolution" value="1.90 A"/>
    <property type="chains" value="C=640-652"/>
</dbReference>
<dbReference type="PDB" id="1RKH">
    <property type="method" value="X-ray"/>
    <property type="resolution" value="2.28 A"/>
    <property type="chains" value="C=640-652"/>
</dbReference>
<dbReference type="PDB" id="2O4J">
    <property type="method" value="X-ray"/>
    <property type="resolution" value="1.74 A"/>
    <property type="chains" value="C=640-652"/>
</dbReference>
<dbReference type="PDB" id="2O4R">
    <property type="method" value="X-ray"/>
    <property type="resolution" value="1.98 A"/>
    <property type="chains" value="C=640-652"/>
</dbReference>
<dbReference type="PDB" id="2ZFX">
    <property type="method" value="X-ray"/>
    <property type="resolution" value="1.99 A"/>
    <property type="chains" value="C=640-652"/>
</dbReference>
<dbReference type="PDB" id="3A2H">
    <property type="method" value="X-ray"/>
    <property type="resolution" value="2.50 A"/>
    <property type="chains" value="B=640-652"/>
</dbReference>
<dbReference type="PDB" id="3AUN">
    <property type="method" value="X-ray"/>
    <property type="resolution" value="1.81 A"/>
    <property type="chains" value="B=640-652"/>
</dbReference>
<dbReference type="PDB" id="3VJS">
    <property type="method" value="X-ray"/>
    <property type="resolution" value="1.93 A"/>
    <property type="chains" value="C=640-652"/>
</dbReference>
<dbReference type="PDB" id="3VJT">
    <property type="method" value="X-ray"/>
    <property type="resolution" value="2.00 A"/>
    <property type="chains" value="C=640-652"/>
</dbReference>
<dbReference type="PDB" id="3VRT">
    <property type="method" value="X-ray"/>
    <property type="resolution" value="2.40 A"/>
    <property type="chains" value="C=640-652"/>
</dbReference>
<dbReference type="PDB" id="3VRU">
    <property type="method" value="X-ray"/>
    <property type="resolution" value="2.00 A"/>
    <property type="chains" value="C=640-652"/>
</dbReference>
<dbReference type="PDB" id="3VRV">
    <property type="method" value="X-ray"/>
    <property type="resolution" value="1.90 A"/>
    <property type="chains" value="C=640-652"/>
</dbReference>
<dbReference type="PDB" id="3VRW">
    <property type="method" value="X-ray"/>
    <property type="resolution" value="2.40 A"/>
    <property type="chains" value="C=640-652"/>
</dbReference>
<dbReference type="PDB" id="3W0G">
    <property type="method" value="X-ray"/>
    <property type="resolution" value="1.94 A"/>
    <property type="chains" value="C=640-652"/>
</dbReference>
<dbReference type="PDB" id="3W0H">
    <property type="method" value="X-ray"/>
    <property type="resolution" value="1.80 A"/>
    <property type="chains" value="C=640-652"/>
</dbReference>
<dbReference type="PDB" id="3W0I">
    <property type="method" value="X-ray"/>
    <property type="resolution" value="1.90 A"/>
    <property type="chains" value="C=640-652"/>
</dbReference>
<dbReference type="PDB" id="3W0J">
    <property type="method" value="X-ray"/>
    <property type="resolution" value="1.84 A"/>
    <property type="chains" value="C=640-652"/>
</dbReference>
<dbReference type="PDB" id="3W5P">
    <property type="method" value="X-ray"/>
    <property type="resolution" value="1.90 A"/>
    <property type="chains" value="C=640-652"/>
</dbReference>
<dbReference type="PDB" id="3W5Q">
    <property type="method" value="X-ray"/>
    <property type="resolution" value="1.90 A"/>
    <property type="chains" value="C=640-652"/>
</dbReference>
<dbReference type="PDB" id="3W5R">
    <property type="method" value="X-ray"/>
    <property type="resolution" value="2.20 A"/>
    <property type="chains" value="C=640-652"/>
</dbReference>
<dbReference type="PDB" id="3W5T">
    <property type="method" value="X-ray"/>
    <property type="resolution" value="2.29 A"/>
    <property type="chains" value="C=640-652"/>
</dbReference>
<dbReference type="PDB" id="3WT5">
    <property type="method" value="X-ray"/>
    <property type="resolution" value="1.90 A"/>
    <property type="chains" value="C=640-652"/>
</dbReference>
<dbReference type="PDB" id="3WT6">
    <property type="method" value="X-ray"/>
    <property type="resolution" value="2.00 A"/>
    <property type="chains" value="C=640-652"/>
</dbReference>
<dbReference type="PDB" id="3WT7">
    <property type="method" value="X-ray"/>
    <property type="resolution" value="2.40 A"/>
    <property type="chains" value="C=640-652"/>
</dbReference>
<dbReference type="PDB" id="3WTQ">
    <property type="method" value="X-ray"/>
    <property type="resolution" value="2.10 A"/>
    <property type="chains" value="C=640-652"/>
</dbReference>
<dbReference type="PDB" id="4YNK">
    <property type="method" value="X-ray"/>
    <property type="resolution" value="2.30 A"/>
    <property type="chains" value="C=640-652"/>
</dbReference>
<dbReference type="PDB" id="5AWJ">
    <property type="method" value="X-ray"/>
    <property type="resolution" value="2.20 A"/>
    <property type="chains" value="C=640-652"/>
</dbReference>
<dbReference type="PDB" id="5AWK">
    <property type="method" value="X-ray"/>
    <property type="resolution" value="2.90 A"/>
    <property type="chains" value="C=640-652"/>
</dbReference>
<dbReference type="PDB" id="5B41">
    <property type="method" value="X-ray"/>
    <property type="resolution" value="1.89 A"/>
    <property type="chains" value="C=640-652"/>
</dbReference>
<dbReference type="PDB" id="5B5B">
    <property type="method" value="X-ray"/>
    <property type="resolution" value="2.00 A"/>
    <property type="chains" value="C/F=640-652"/>
</dbReference>
<dbReference type="PDB" id="5GIC">
    <property type="method" value="X-ray"/>
    <property type="resolution" value="2.35 A"/>
    <property type="chains" value="C=641-650"/>
</dbReference>
<dbReference type="PDB" id="5GID">
    <property type="method" value="X-ray"/>
    <property type="resolution" value="2.15 A"/>
    <property type="chains" value="C=641-649"/>
</dbReference>
<dbReference type="PDB" id="5GIE">
    <property type="method" value="X-ray"/>
    <property type="resolution" value="2.39 A"/>
    <property type="chains" value="C/E=641-650"/>
</dbReference>
<dbReference type="PDB" id="5XPM">
    <property type="method" value="X-ray"/>
    <property type="resolution" value="2.20 A"/>
    <property type="chains" value="C=640-652"/>
</dbReference>
<dbReference type="PDB" id="5XPN">
    <property type="method" value="X-ray"/>
    <property type="resolution" value="1.96 A"/>
    <property type="chains" value="C=640-652"/>
</dbReference>
<dbReference type="PDB" id="5XPO">
    <property type="method" value="X-ray"/>
    <property type="resolution" value="2.28 A"/>
    <property type="chains" value="C=640-652"/>
</dbReference>
<dbReference type="PDB" id="5XPP">
    <property type="method" value="X-ray"/>
    <property type="resolution" value="2.85 A"/>
    <property type="chains" value="C=640-652"/>
</dbReference>
<dbReference type="PDB" id="5XUQ">
    <property type="method" value="X-ray"/>
    <property type="resolution" value="2.80 A"/>
    <property type="chains" value="C=640-652"/>
</dbReference>
<dbReference type="PDB" id="5XZF">
    <property type="method" value="X-ray"/>
    <property type="resolution" value="2.10 A"/>
    <property type="chains" value="C=640-652"/>
</dbReference>
<dbReference type="PDB" id="5XZH">
    <property type="method" value="X-ray"/>
    <property type="resolution" value="2.00 A"/>
    <property type="chains" value="C=640-652"/>
</dbReference>
<dbReference type="PDB" id="5ZWE">
    <property type="method" value="X-ray"/>
    <property type="resolution" value="2.72 A"/>
    <property type="chains" value="C=640-652"/>
</dbReference>
<dbReference type="PDB" id="5ZWF">
    <property type="method" value="X-ray"/>
    <property type="resolution" value="2.10 A"/>
    <property type="chains" value="C=640-652"/>
</dbReference>
<dbReference type="PDB" id="5ZWH">
    <property type="method" value="X-ray"/>
    <property type="resolution" value="2.38 A"/>
    <property type="chains" value="C=640-652"/>
</dbReference>
<dbReference type="PDB" id="5ZWI">
    <property type="method" value="X-ray"/>
    <property type="resolution" value="2.40 A"/>
    <property type="chains" value="C=640-652"/>
</dbReference>
<dbReference type="PDB" id="6D94">
    <property type="method" value="X-ray"/>
    <property type="resolution" value="1.90 A"/>
    <property type="chains" value="B=632-655"/>
</dbReference>
<dbReference type="PDB" id="6JEZ">
    <property type="method" value="X-ray"/>
    <property type="resolution" value="2.30 A"/>
    <property type="chains" value="C=640-652"/>
</dbReference>
<dbReference type="PDB" id="6K5O">
    <property type="method" value="X-ray"/>
    <property type="resolution" value="1.80 A"/>
    <property type="chains" value="C=640-652"/>
</dbReference>
<dbReference type="PDB" id="6ONJ">
    <property type="method" value="X-ray"/>
    <property type="resolution" value="2.30 A"/>
    <property type="chains" value="C=638-656"/>
</dbReference>
<dbReference type="PDB" id="7C7V">
    <property type="method" value="X-ray"/>
    <property type="resolution" value="2.00 A"/>
    <property type="chains" value="C=640-652"/>
</dbReference>
<dbReference type="PDB" id="7C7W">
    <property type="method" value="X-ray"/>
    <property type="resolution" value="1.90 A"/>
    <property type="chains" value="C=640-652"/>
</dbReference>
<dbReference type="PDB" id="7EMF">
    <property type="method" value="EM"/>
    <property type="resolution" value="3.50 A"/>
    <property type="chains" value="A=1-1581"/>
</dbReference>
<dbReference type="PDB" id="7ENA">
    <property type="method" value="EM"/>
    <property type="resolution" value="4.07 A"/>
    <property type="chains" value="a=1-1581"/>
</dbReference>
<dbReference type="PDB" id="7ENC">
    <property type="method" value="EM"/>
    <property type="resolution" value="4.13 A"/>
    <property type="chains" value="a=1-1581"/>
</dbReference>
<dbReference type="PDB" id="7ENJ">
    <property type="method" value="EM"/>
    <property type="resolution" value="4.40 A"/>
    <property type="chains" value="A=1-1581"/>
</dbReference>
<dbReference type="PDB" id="7OXU">
    <property type="method" value="X-ray"/>
    <property type="resolution" value="2.39 A"/>
    <property type="chains" value="B=641-650"/>
</dbReference>
<dbReference type="PDB" id="7VQP">
    <property type="method" value="X-ray"/>
    <property type="resolution" value="1.94 A"/>
    <property type="chains" value="C=640-652"/>
</dbReference>
<dbReference type="PDB" id="8GXQ">
    <property type="method" value="EM"/>
    <property type="resolution" value="5.04 A"/>
    <property type="chains" value="a=1-1581"/>
</dbReference>
<dbReference type="PDB" id="8GXS">
    <property type="method" value="EM"/>
    <property type="resolution" value="4.16 A"/>
    <property type="chains" value="a=1-1581"/>
</dbReference>
<dbReference type="PDB" id="8T9D">
    <property type="method" value="EM"/>
    <property type="resolution" value="4.66 A"/>
    <property type="chains" value="A=1-1581"/>
</dbReference>
<dbReference type="PDB" id="8TQW">
    <property type="method" value="EM"/>
    <property type="resolution" value="8.20 A"/>
    <property type="chains" value="A=1-1581"/>
</dbReference>
<dbReference type="PDB" id="8TRH">
    <property type="method" value="EM"/>
    <property type="resolution" value="3.70 A"/>
    <property type="chains" value="A=1-1581"/>
</dbReference>
<dbReference type="PDBsum" id="1RJK"/>
<dbReference type="PDBsum" id="1RK3"/>
<dbReference type="PDBsum" id="1RKG"/>
<dbReference type="PDBsum" id="1RKH"/>
<dbReference type="PDBsum" id="2O4J"/>
<dbReference type="PDBsum" id="2O4R"/>
<dbReference type="PDBsum" id="2ZFX"/>
<dbReference type="PDBsum" id="3A2H"/>
<dbReference type="PDBsum" id="3AUN"/>
<dbReference type="PDBsum" id="3VJS"/>
<dbReference type="PDBsum" id="3VJT"/>
<dbReference type="PDBsum" id="3VRT"/>
<dbReference type="PDBsum" id="3VRU"/>
<dbReference type="PDBsum" id="3VRV"/>
<dbReference type="PDBsum" id="3VRW"/>
<dbReference type="PDBsum" id="3W0G"/>
<dbReference type="PDBsum" id="3W0H"/>
<dbReference type="PDBsum" id="3W0I"/>
<dbReference type="PDBsum" id="3W0J"/>
<dbReference type="PDBsum" id="3W5P"/>
<dbReference type="PDBsum" id="3W5Q"/>
<dbReference type="PDBsum" id="3W5R"/>
<dbReference type="PDBsum" id="3W5T"/>
<dbReference type="PDBsum" id="3WT5"/>
<dbReference type="PDBsum" id="3WT6"/>
<dbReference type="PDBsum" id="3WT7"/>
<dbReference type="PDBsum" id="3WTQ"/>
<dbReference type="PDBsum" id="4YNK"/>
<dbReference type="PDBsum" id="5AWJ"/>
<dbReference type="PDBsum" id="5AWK"/>
<dbReference type="PDBsum" id="5B41"/>
<dbReference type="PDBsum" id="5B5B"/>
<dbReference type="PDBsum" id="5GIC"/>
<dbReference type="PDBsum" id="5GID"/>
<dbReference type="PDBsum" id="5GIE"/>
<dbReference type="PDBsum" id="5XPM"/>
<dbReference type="PDBsum" id="5XPN"/>
<dbReference type="PDBsum" id="5XPO"/>
<dbReference type="PDBsum" id="5XPP"/>
<dbReference type="PDBsum" id="5XUQ"/>
<dbReference type="PDBsum" id="5XZF"/>
<dbReference type="PDBsum" id="5XZH"/>
<dbReference type="PDBsum" id="5ZWE"/>
<dbReference type="PDBsum" id="5ZWF"/>
<dbReference type="PDBsum" id="5ZWH"/>
<dbReference type="PDBsum" id="5ZWI"/>
<dbReference type="PDBsum" id="6D94"/>
<dbReference type="PDBsum" id="6JEZ"/>
<dbReference type="PDBsum" id="6K5O"/>
<dbReference type="PDBsum" id="6ONJ"/>
<dbReference type="PDBsum" id="7C7V"/>
<dbReference type="PDBsum" id="7C7W"/>
<dbReference type="PDBsum" id="7EMF"/>
<dbReference type="PDBsum" id="7ENA"/>
<dbReference type="PDBsum" id="7ENC"/>
<dbReference type="PDBsum" id="7ENJ"/>
<dbReference type="PDBsum" id="7OXU"/>
<dbReference type="PDBsum" id="7VQP"/>
<dbReference type="PDBsum" id="8GXQ"/>
<dbReference type="PDBsum" id="8GXS"/>
<dbReference type="PDBsum" id="8T9D"/>
<dbReference type="PDBsum" id="8TQW"/>
<dbReference type="PDBsum" id="8TRH"/>
<dbReference type="EMDB" id="EMD-31191"/>
<dbReference type="EMDB" id="EMD-31204"/>
<dbReference type="EMDB" id="EMD-31207"/>
<dbReference type="EMDB" id="EMD-31211"/>
<dbReference type="EMDB" id="EMD-34359"/>
<dbReference type="EMDB" id="EMD-34360"/>
<dbReference type="EMDB" id="EMD-41107"/>
<dbReference type="EMDB" id="EMD-41565"/>
<dbReference type="EMDB" id="EMD-41580"/>
<dbReference type="SMR" id="Q15648"/>
<dbReference type="BioGRID" id="111465">
    <property type="interactions" value="201"/>
</dbReference>
<dbReference type="ComplexPortal" id="CPX-3227">
    <property type="entry name" value="Core mediator complex"/>
</dbReference>
<dbReference type="CORUM" id="Q15648"/>
<dbReference type="DIP" id="DIP-24212N"/>
<dbReference type="ELM" id="Q15648"/>
<dbReference type="FunCoup" id="Q15648">
    <property type="interactions" value="4184"/>
</dbReference>
<dbReference type="IntAct" id="Q15648">
    <property type="interactions" value="83"/>
</dbReference>
<dbReference type="MINT" id="Q15648"/>
<dbReference type="STRING" id="9606.ENSP00000300651"/>
<dbReference type="DrugBank" id="DB04891">
    <property type="generic name" value="Becocalcidiol"/>
</dbReference>
<dbReference type="GlyCosmos" id="Q15648">
    <property type="glycosylation" value="7 sites, 2 glycans"/>
</dbReference>
<dbReference type="GlyGen" id="Q15648">
    <property type="glycosylation" value="22 sites, 2 N-linked glycans (2 sites), 2 O-linked glycans (19 sites)"/>
</dbReference>
<dbReference type="iPTMnet" id="Q15648"/>
<dbReference type="PhosphoSitePlus" id="Q15648"/>
<dbReference type="SwissPalm" id="Q15648"/>
<dbReference type="BioMuta" id="MED1"/>
<dbReference type="DMDM" id="158518535"/>
<dbReference type="jPOST" id="Q15648"/>
<dbReference type="MassIVE" id="Q15648"/>
<dbReference type="PaxDb" id="9606-ENSP00000300651"/>
<dbReference type="PeptideAtlas" id="Q15648"/>
<dbReference type="ProteomicsDB" id="60685">
    <molecule id="Q15648-1"/>
</dbReference>
<dbReference type="ProteomicsDB" id="60686">
    <molecule id="Q15648-3"/>
</dbReference>
<dbReference type="Pumba" id="Q15648"/>
<dbReference type="Antibodypedia" id="4326">
    <property type="antibodies" value="526 antibodies from 39 providers"/>
</dbReference>
<dbReference type="DNASU" id="5469"/>
<dbReference type="Ensembl" id="ENST00000300651.11">
    <molecule id="Q15648-1"/>
    <property type="protein sequence ID" value="ENSP00000300651.6"/>
    <property type="gene ID" value="ENSG00000125686.12"/>
</dbReference>
<dbReference type="Ensembl" id="ENST00000394287.7">
    <molecule id="Q15648-3"/>
    <property type="protein sequence ID" value="ENSP00000377828.3"/>
    <property type="gene ID" value="ENSG00000125686.12"/>
</dbReference>
<dbReference type="GeneID" id="5469"/>
<dbReference type="KEGG" id="hsa:5469"/>
<dbReference type="MANE-Select" id="ENST00000300651.11">
    <property type="protein sequence ID" value="ENSP00000300651.6"/>
    <property type="RefSeq nucleotide sequence ID" value="NM_004774.4"/>
    <property type="RefSeq protein sequence ID" value="NP_004765.2"/>
</dbReference>
<dbReference type="UCSC" id="uc002hru.3">
    <molecule id="Q15648-1"/>
    <property type="organism name" value="human"/>
</dbReference>
<dbReference type="AGR" id="HGNC:9234"/>
<dbReference type="CTD" id="5469"/>
<dbReference type="DisGeNET" id="5469"/>
<dbReference type="GeneCards" id="MED1"/>
<dbReference type="HGNC" id="HGNC:9234">
    <property type="gene designation" value="MED1"/>
</dbReference>
<dbReference type="HPA" id="ENSG00000125686">
    <property type="expression patterns" value="Low tissue specificity"/>
</dbReference>
<dbReference type="MalaCards" id="MED1"/>
<dbReference type="MIM" id="604311">
    <property type="type" value="gene"/>
</dbReference>
<dbReference type="neXtProt" id="NX_Q15648"/>
<dbReference type="OpenTargets" id="ENSG00000125686"/>
<dbReference type="PharmGKB" id="PA33556"/>
<dbReference type="VEuPathDB" id="HostDB:ENSG00000125686"/>
<dbReference type="eggNOG" id="ENOG502QPZ7">
    <property type="taxonomic scope" value="Eukaryota"/>
</dbReference>
<dbReference type="GeneTree" id="ENSGT00660000095569"/>
<dbReference type="HOGENOM" id="CLU_019440_0_0_1"/>
<dbReference type="InParanoid" id="Q15648"/>
<dbReference type="OMA" id="NMKERHE"/>
<dbReference type="OrthoDB" id="2281547at2759"/>
<dbReference type="PAN-GO" id="Q15648">
    <property type="GO annotations" value="7 GO annotations based on evolutionary models"/>
</dbReference>
<dbReference type="PhylomeDB" id="Q15648"/>
<dbReference type="TreeFam" id="TF324954"/>
<dbReference type="PathwayCommons" id="Q15648"/>
<dbReference type="Reactome" id="R-HSA-1368082">
    <property type="pathway name" value="RORA activates gene expression"/>
</dbReference>
<dbReference type="Reactome" id="R-HSA-1368108">
    <property type="pathway name" value="BMAL1:CLOCK,NPAS2 activates circadian gene expression"/>
</dbReference>
<dbReference type="Reactome" id="R-HSA-1989781">
    <property type="pathway name" value="PPARA activates gene expression"/>
</dbReference>
<dbReference type="Reactome" id="R-HSA-212436">
    <property type="pathway name" value="Generic Transcription Pathway"/>
</dbReference>
<dbReference type="Reactome" id="R-HSA-2151201">
    <property type="pathway name" value="Transcriptional activation of mitochondrial biogenesis"/>
</dbReference>
<dbReference type="Reactome" id="R-HSA-2426168">
    <property type="pathway name" value="Activation of gene expression by SREBF (SREBP)"/>
</dbReference>
<dbReference type="Reactome" id="R-HSA-381340">
    <property type="pathway name" value="Transcriptional regulation of white adipocyte differentiation"/>
</dbReference>
<dbReference type="Reactome" id="R-HSA-383280">
    <property type="pathway name" value="Nuclear Receptor transcription pathway"/>
</dbReference>
<dbReference type="Reactome" id="R-HSA-400206">
    <property type="pathway name" value="Regulation of lipid metabolism by PPARalpha"/>
</dbReference>
<dbReference type="Reactome" id="R-HSA-400253">
    <property type="pathway name" value="Circadian Clock"/>
</dbReference>
<dbReference type="Reactome" id="R-HSA-9018519">
    <property type="pathway name" value="Estrogen-dependent gene expression"/>
</dbReference>
<dbReference type="Reactome" id="R-HSA-9707564">
    <property type="pathway name" value="Cytoprotection by HMOX1"/>
</dbReference>
<dbReference type="Reactome" id="R-HSA-9707616">
    <property type="pathway name" value="Heme signaling"/>
</dbReference>
<dbReference type="Reactome" id="R-HSA-9833110">
    <property type="pathway name" value="RSV-host interactions"/>
</dbReference>
<dbReference type="Reactome" id="R-HSA-9841922">
    <property type="pathway name" value="MLL4 and MLL3 complexes regulate expression of PPARG target genes in adipogenesis and hepatic steatosis"/>
</dbReference>
<dbReference type="SignaLink" id="Q15648"/>
<dbReference type="SIGNOR" id="Q15648"/>
<dbReference type="BioGRID-ORCS" id="5469">
    <property type="hits" value="402 hits in 1198 CRISPR screens"/>
</dbReference>
<dbReference type="CD-CODE" id="06422D8E">
    <property type="entry name" value="Synthetic Condensate 000175"/>
</dbReference>
<dbReference type="CD-CODE" id="178CF9FC">
    <property type="entry name" value="Synthetic Condensate 000200"/>
</dbReference>
<dbReference type="CD-CODE" id="20D775CC">
    <property type="entry name" value="Synthetic Condensate 000188"/>
</dbReference>
<dbReference type="CD-CODE" id="2958074C">
    <property type="entry name" value="Synthetic Condensate 000352"/>
</dbReference>
<dbReference type="CD-CODE" id="38EC0B30">
    <property type="entry name" value="Transcriptional condensate"/>
</dbReference>
<dbReference type="CD-CODE" id="462A97B5">
    <property type="entry name" value="Leucocyte nuclear body"/>
</dbReference>
<dbReference type="CD-CODE" id="50D32664">
    <property type="entry name" value="Synthetic Condensate 000192"/>
</dbReference>
<dbReference type="CD-CODE" id="7231FD3C">
    <property type="entry name" value="Synthetic Condensate 000185"/>
</dbReference>
<dbReference type="CD-CODE" id="7EC67CCE">
    <property type="entry name" value="Synthetic Condensate 000169"/>
</dbReference>
<dbReference type="CD-CODE" id="804901D1">
    <property type="entry name" value="Nuclear speckle"/>
</dbReference>
<dbReference type="CD-CODE" id="9355EE84">
    <property type="entry name" value="Synthetic Condensate 000292"/>
</dbReference>
<dbReference type="CD-CODE" id="AC924507">
    <property type="entry name" value="Synthetic Condensate 000331"/>
</dbReference>
<dbReference type="CD-CODE" id="B9AD63BA">
    <property type="entry name" value="Synthetic Condensate 000189"/>
</dbReference>
<dbReference type="CD-CODE" id="BADFB975">
    <property type="entry name" value="Synthetic Condensate 000187"/>
</dbReference>
<dbReference type="CD-CODE" id="BF2F133A">
    <property type="entry name" value="Synthetic Condensate 000204"/>
</dbReference>
<dbReference type="CD-CODE" id="DBAF6C49">
    <property type="entry name" value="Synthetic Condensate 000170"/>
</dbReference>
<dbReference type="CD-CODE" id="E11B6BAB">
    <property type="entry name" value="Synthetic Condensate 000195"/>
</dbReference>
<dbReference type="ChiTaRS" id="MED1">
    <property type="organism name" value="human"/>
</dbReference>
<dbReference type="EvolutionaryTrace" id="Q15648"/>
<dbReference type="GeneWiki" id="MED1"/>
<dbReference type="GenomeRNAi" id="5469"/>
<dbReference type="Pharos" id="Q15648">
    <property type="development level" value="Tbio"/>
</dbReference>
<dbReference type="PRO" id="PR:Q15648"/>
<dbReference type="Proteomes" id="UP000005640">
    <property type="component" value="Chromosome 17"/>
</dbReference>
<dbReference type="RNAct" id="Q15648">
    <property type="molecule type" value="protein"/>
</dbReference>
<dbReference type="Bgee" id="ENSG00000125686">
    <property type="expression patterns" value="Expressed in tendon of biceps brachii and 211 other cell types or tissues"/>
</dbReference>
<dbReference type="ExpressionAtlas" id="Q15648">
    <property type="expression patterns" value="baseline and differential"/>
</dbReference>
<dbReference type="GO" id="GO:0000785">
    <property type="term" value="C:chromatin"/>
    <property type="evidence" value="ECO:0007669"/>
    <property type="project" value="Ensembl"/>
</dbReference>
<dbReference type="GO" id="GO:0070847">
    <property type="term" value="C:core mediator complex"/>
    <property type="evidence" value="ECO:0000353"/>
    <property type="project" value="ComplexPortal"/>
</dbReference>
<dbReference type="GO" id="GO:0016592">
    <property type="term" value="C:mediator complex"/>
    <property type="evidence" value="ECO:0000314"/>
    <property type="project" value="UniProtKB"/>
</dbReference>
<dbReference type="GO" id="GO:0016020">
    <property type="term" value="C:membrane"/>
    <property type="evidence" value="ECO:0007005"/>
    <property type="project" value="UniProtKB"/>
</dbReference>
<dbReference type="GO" id="GO:0005730">
    <property type="term" value="C:nucleolus"/>
    <property type="evidence" value="ECO:0000314"/>
    <property type="project" value="UniProtKB"/>
</dbReference>
<dbReference type="GO" id="GO:0005654">
    <property type="term" value="C:nucleoplasm"/>
    <property type="evidence" value="ECO:0000314"/>
    <property type="project" value="HPA"/>
</dbReference>
<dbReference type="GO" id="GO:0005634">
    <property type="term" value="C:nucleus"/>
    <property type="evidence" value="ECO:0000314"/>
    <property type="project" value="UniProtKB"/>
</dbReference>
<dbReference type="GO" id="GO:0032993">
    <property type="term" value="C:protein-DNA complex"/>
    <property type="evidence" value="ECO:0007669"/>
    <property type="project" value="Ensembl"/>
</dbReference>
<dbReference type="GO" id="GO:0000151">
    <property type="term" value="C:ubiquitin ligase complex"/>
    <property type="evidence" value="ECO:0007669"/>
    <property type="project" value="Ensembl"/>
</dbReference>
<dbReference type="GO" id="GO:0003682">
    <property type="term" value="F:chromatin binding"/>
    <property type="evidence" value="ECO:0000315"/>
    <property type="project" value="UniProtKB"/>
</dbReference>
<dbReference type="GO" id="GO:0031490">
    <property type="term" value="F:chromatin DNA binding"/>
    <property type="evidence" value="ECO:0007669"/>
    <property type="project" value="Ensembl"/>
</dbReference>
<dbReference type="GO" id="GO:0140297">
    <property type="term" value="F:DNA-binding transcription factor binding"/>
    <property type="evidence" value="ECO:0000353"/>
    <property type="project" value="UniProtKB"/>
</dbReference>
<dbReference type="GO" id="GO:0140296">
    <property type="term" value="F:general transcription initiation factor binding"/>
    <property type="evidence" value="ECO:0007669"/>
    <property type="project" value="Ensembl"/>
</dbReference>
<dbReference type="GO" id="GO:0035035">
    <property type="term" value="F:histone acetyltransferase binding"/>
    <property type="evidence" value="ECO:0007669"/>
    <property type="project" value="Ensembl"/>
</dbReference>
<dbReference type="GO" id="GO:0050693">
    <property type="term" value="F:LBD domain binding"/>
    <property type="evidence" value="ECO:0000353"/>
    <property type="project" value="UniProtKB"/>
</dbReference>
<dbReference type="GO" id="GO:0030331">
    <property type="term" value="F:nuclear estrogen receptor binding"/>
    <property type="evidence" value="ECO:0000353"/>
    <property type="project" value="UniProtKB"/>
</dbReference>
<dbReference type="GO" id="GO:0016922">
    <property type="term" value="F:nuclear receptor binding"/>
    <property type="evidence" value="ECO:0000314"/>
    <property type="project" value="UniProtKB"/>
</dbReference>
<dbReference type="GO" id="GO:0042974">
    <property type="term" value="F:nuclear retinoic acid receptor binding"/>
    <property type="evidence" value="ECO:0000353"/>
    <property type="project" value="UniProtKB"/>
</dbReference>
<dbReference type="GO" id="GO:0046966">
    <property type="term" value="F:nuclear thyroid hormone receptor binding"/>
    <property type="evidence" value="ECO:0000314"/>
    <property type="project" value="UniProtKB"/>
</dbReference>
<dbReference type="GO" id="GO:0042809">
    <property type="term" value="F:nuclear vitamin D receptor binding"/>
    <property type="evidence" value="ECO:0000353"/>
    <property type="project" value="UniProtKB"/>
</dbReference>
<dbReference type="GO" id="GO:0042975">
    <property type="term" value="F:peroxisome proliferator activated receptor binding"/>
    <property type="evidence" value="ECO:0000353"/>
    <property type="project" value="UniProtKB"/>
</dbReference>
<dbReference type="GO" id="GO:1990841">
    <property type="term" value="F:promoter-specific chromatin binding"/>
    <property type="evidence" value="ECO:0007669"/>
    <property type="project" value="Ensembl"/>
</dbReference>
<dbReference type="GO" id="GO:0044877">
    <property type="term" value="F:protein-containing complex binding"/>
    <property type="evidence" value="ECO:0007669"/>
    <property type="project" value="Ensembl"/>
</dbReference>
<dbReference type="GO" id="GO:0000978">
    <property type="term" value="F:RNA polymerase II cis-regulatory region sequence-specific DNA binding"/>
    <property type="evidence" value="ECO:0007669"/>
    <property type="project" value="Ensembl"/>
</dbReference>
<dbReference type="GO" id="GO:0003713">
    <property type="term" value="F:transcription coactivator activity"/>
    <property type="evidence" value="ECO:0000314"/>
    <property type="project" value="UniProtKB"/>
</dbReference>
<dbReference type="GO" id="GO:0001223">
    <property type="term" value="F:transcription coactivator binding"/>
    <property type="evidence" value="ECO:0000353"/>
    <property type="project" value="UniProtKB"/>
</dbReference>
<dbReference type="GO" id="GO:0003712">
    <property type="term" value="F:transcription coregulator activity"/>
    <property type="evidence" value="ECO:0000314"/>
    <property type="project" value="UniProtKB"/>
</dbReference>
<dbReference type="GO" id="GO:0003714">
    <property type="term" value="F:transcription corepressor activity"/>
    <property type="evidence" value="ECO:0000250"/>
    <property type="project" value="UniProtKB"/>
</dbReference>
<dbReference type="GO" id="GO:0061630">
    <property type="term" value="F:ubiquitin protein ligase activity"/>
    <property type="evidence" value="ECO:0007669"/>
    <property type="project" value="Ensembl"/>
</dbReference>
<dbReference type="GO" id="GO:0006702">
    <property type="term" value="P:androgen biosynthetic process"/>
    <property type="evidence" value="ECO:0000315"/>
    <property type="project" value="UniProtKB"/>
</dbReference>
<dbReference type="GO" id="GO:0001525">
    <property type="term" value="P:angiogenesis"/>
    <property type="evidence" value="ECO:0000250"/>
    <property type="project" value="UniProtKB"/>
</dbReference>
<dbReference type="GO" id="GO:0031100">
    <property type="term" value="P:animal organ regeneration"/>
    <property type="evidence" value="ECO:0007669"/>
    <property type="project" value="Ensembl"/>
</dbReference>
<dbReference type="GO" id="GO:0007420">
    <property type="term" value="P:brain development"/>
    <property type="evidence" value="ECO:0007669"/>
    <property type="project" value="Ensembl"/>
</dbReference>
<dbReference type="GO" id="GO:0000902">
    <property type="term" value="P:cell morphogenesis"/>
    <property type="evidence" value="ECO:0000315"/>
    <property type="project" value="UniProtKB"/>
</dbReference>
<dbReference type="GO" id="GO:0071364">
    <property type="term" value="P:cellular response to epidermal growth factor stimulus"/>
    <property type="evidence" value="ECO:0000314"/>
    <property type="project" value="UniProtKB"/>
</dbReference>
<dbReference type="GO" id="GO:0035729">
    <property type="term" value="P:cellular response to hepatocyte growth factor stimulus"/>
    <property type="evidence" value="ECO:0007669"/>
    <property type="project" value="Ensembl"/>
</dbReference>
<dbReference type="GO" id="GO:0071383">
    <property type="term" value="P:cellular response to steroid hormone stimulus"/>
    <property type="evidence" value="ECO:0000314"/>
    <property type="project" value="UniProtKB"/>
</dbReference>
<dbReference type="GO" id="GO:0097067">
    <property type="term" value="P:cellular response to thyroid hormone stimulus"/>
    <property type="evidence" value="ECO:0000314"/>
    <property type="project" value="UniProtKB"/>
</dbReference>
<dbReference type="GO" id="GO:0035050">
    <property type="term" value="P:embryonic heart tube development"/>
    <property type="evidence" value="ECO:0007669"/>
    <property type="project" value="Ensembl"/>
</dbReference>
<dbReference type="GO" id="GO:0035162">
    <property type="term" value="P:embryonic hemopoiesis"/>
    <property type="evidence" value="ECO:0007669"/>
    <property type="project" value="Ensembl"/>
</dbReference>
<dbReference type="GO" id="GO:0035116">
    <property type="term" value="P:embryonic hindlimb morphogenesis"/>
    <property type="evidence" value="ECO:0007669"/>
    <property type="project" value="Ensembl"/>
</dbReference>
<dbReference type="GO" id="GO:0001892">
    <property type="term" value="P:embryonic placenta development"/>
    <property type="evidence" value="ECO:0007669"/>
    <property type="project" value="Ensembl"/>
</dbReference>
<dbReference type="GO" id="GO:0048822">
    <property type="term" value="P:enucleate erythrocyte development"/>
    <property type="evidence" value="ECO:0007669"/>
    <property type="project" value="Ensembl"/>
</dbReference>
<dbReference type="GO" id="GO:0060750">
    <property type="term" value="P:epithelial cell proliferation involved in mammary gland duct elongation"/>
    <property type="evidence" value="ECO:0007669"/>
    <property type="project" value="Ensembl"/>
</dbReference>
<dbReference type="GO" id="GO:0048821">
    <property type="term" value="P:erythrocyte development"/>
    <property type="evidence" value="ECO:0000250"/>
    <property type="project" value="UniProtKB"/>
</dbReference>
<dbReference type="GO" id="GO:0045444">
    <property type="term" value="P:fat cell differentiation"/>
    <property type="evidence" value="ECO:0000314"/>
    <property type="project" value="MGI"/>
</dbReference>
<dbReference type="GO" id="GO:0045023">
    <property type="term" value="P:G0 to G1 transition"/>
    <property type="evidence" value="ECO:0007669"/>
    <property type="project" value="Ensembl"/>
</dbReference>
<dbReference type="GO" id="GO:0060218">
    <property type="term" value="P:hematopoietic stem cell differentiation"/>
    <property type="evidence" value="ECO:0007669"/>
    <property type="project" value="Ensembl"/>
</dbReference>
<dbReference type="GO" id="GO:0030216">
    <property type="term" value="P:keratinocyte differentiation"/>
    <property type="evidence" value="ECO:0000315"/>
    <property type="project" value="UniProtKB"/>
</dbReference>
<dbReference type="GO" id="GO:0007595">
    <property type="term" value="P:lactation"/>
    <property type="evidence" value="ECO:0007669"/>
    <property type="project" value="Ensembl"/>
</dbReference>
<dbReference type="GO" id="GO:0002088">
    <property type="term" value="P:lens development in camera-type eye"/>
    <property type="evidence" value="ECO:0000250"/>
    <property type="project" value="UniProtKB"/>
</dbReference>
<dbReference type="GO" id="GO:0001889">
    <property type="term" value="P:liver development"/>
    <property type="evidence" value="ECO:0007669"/>
    <property type="project" value="Ensembl"/>
</dbReference>
<dbReference type="GO" id="GO:0060745">
    <property type="term" value="P:mammary gland branching involved in pregnancy"/>
    <property type="evidence" value="ECO:0007669"/>
    <property type="project" value="Ensembl"/>
</dbReference>
<dbReference type="GO" id="GO:0060744">
    <property type="term" value="P:mammary gland branching involved in thelarche"/>
    <property type="evidence" value="ECO:0007669"/>
    <property type="project" value="Ensembl"/>
</dbReference>
<dbReference type="GO" id="GO:0035855">
    <property type="term" value="P:megakaryocyte development"/>
    <property type="evidence" value="ECO:0000250"/>
    <property type="project" value="UniProtKB"/>
</dbReference>
<dbReference type="GO" id="GO:0030224">
    <property type="term" value="P:monocyte differentiation"/>
    <property type="evidence" value="ECO:0007669"/>
    <property type="project" value="Ensembl"/>
</dbReference>
<dbReference type="GO" id="GO:0042789">
    <property type="term" value="P:mRNA transcription by RNA polymerase II"/>
    <property type="evidence" value="ECO:0000250"/>
    <property type="project" value="UniProtKB"/>
</dbReference>
<dbReference type="GO" id="GO:0043066">
    <property type="term" value="P:negative regulation of apoptotic process"/>
    <property type="evidence" value="ECO:0000250"/>
    <property type="project" value="UniProtKB"/>
</dbReference>
<dbReference type="GO" id="GO:0010839">
    <property type="term" value="P:negative regulation of keratinocyte proliferation"/>
    <property type="evidence" value="ECO:0000315"/>
    <property type="project" value="UniProtKB"/>
</dbReference>
<dbReference type="GO" id="GO:0045665">
    <property type="term" value="P:negative regulation of neuron differentiation"/>
    <property type="evidence" value="ECO:0000250"/>
    <property type="project" value="UniProtKB"/>
</dbReference>
<dbReference type="GO" id="GO:0000122">
    <property type="term" value="P:negative regulation of transcription by RNA polymerase II"/>
    <property type="evidence" value="ECO:0000250"/>
    <property type="project" value="UniProtKB"/>
</dbReference>
<dbReference type="GO" id="GO:0030518">
    <property type="term" value="P:nuclear receptor-mediated steroid hormone signaling pathway"/>
    <property type="evidence" value="ECO:0000314"/>
    <property type="project" value="UniProtKB"/>
</dbReference>
<dbReference type="GO" id="GO:0035357">
    <property type="term" value="P:peroxisome proliferator activated receptor signaling pathway"/>
    <property type="evidence" value="ECO:0007669"/>
    <property type="project" value="Ensembl"/>
</dbReference>
<dbReference type="GO" id="GO:0045893">
    <property type="term" value="P:positive regulation of DNA-templated transcription"/>
    <property type="evidence" value="ECO:0000314"/>
    <property type="project" value="UniProtKB"/>
</dbReference>
<dbReference type="GO" id="GO:0045648">
    <property type="term" value="P:positive regulation of erythrocyte differentiation"/>
    <property type="evidence" value="ECO:0000315"/>
    <property type="project" value="UniProtKB"/>
</dbReference>
<dbReference type="GO" id="GO:0070318">
    <property type="term" value="P:positive regulation of G0 to G1 transition"/>
    <property type="evidence" value="ECO:0007669"/>
    <property type="project" value="Ensembl"/>
</dbReference>
<dbReference type="GO" id="GO:0010628">
    <property type="term" value="P:positive regulation of gene expression"/>
    <property type="evidence" value="ECO:0000314"/>
    <property type="project" value="UniProtKB"/>
</dbReference>
<dbReference type="GO" id="GO:2000347">
    <property type="term" value="P:positive regulation of hepatocyte proliferation"/>
    <property type="evidence" value="ECO:0007669"/>
    <property type="project" value="Ensembl"/>
</dbReference>
<dbReference type="GO" id="GO:0033148">
    <property type="term" value="P:positive regulation of intracellular estrogen receptor signaling pathway"/>
    <property type="evidence" value="ECO:0007669"/>
    <property type="project" value="Ensembl"/>
</dbReference>
<dbReference type="GO" id="GO:0045618">
    <property type="term" value="P:positive regulation of keratinocyte differentiation"/>
    <property type="evidence" value="ECO:0000315"/>
    <property type="project" value="UniProtKB"/>
</dbReference>
<dbReference type="GO" id="GO:0045944">
    <property type="term" value="P:positive regulation of transcription by RNA polymerase II"/>
    <property type="evidence" value="ECO:0000314"/>
    <property type="project" value="UniProtKB"/>
</dbReference>
<dbReference type="GO" id="GO:0032968">
    <property type="term" value="P:positive regulation of transcription elongation by RNA polymerase II"/>
    <property type="evidence" value="ECO:0000303"/>
    <property type="project" value="ComplexPortal"/>
</dbReference>
<dbReference type="GO" id="GO:0060261">
    <property type="term" value="P:positive regulation of transcription initiation by RNA polymerase II"/>
    <property type="evidence" value="ECO:0000314"/>
    <property type="project" value="UniProtKB"/>
</dbReference>
<dbReference type="GO" id="GO:0060335">
    <property type="term" value="P:positive regulation of type II interferon-mediated signaling pathway"/>
    <property type="evidence" value="ECO:0007669"/>
    <property type="project" value="Ensembl"/>
</dbReference>
<dbReference type="GO" id="GO:0006606">
    <property type="term" value="P:protein import into nucleus"/>
    <property type="evidence" value="ECO:0007669"/>
    <property type="project" value="Ensembl"/>
</dbReference>
<dbReference type="GO" id="GO:0016567">
    <property type="term" value="P:protein ubiquitination"/>
    <property type="evidence" value="ECO:0007669"/>
    <property type="project" value="Ensembl"/>
</dbReference>
<dbReference type="GO" id="GO:2001141">
    <property type="term" value="P:regulation of RNA biosynthetic process"/>
    <property type="evidence" value="ECO:0000315"/>
    <property type="project" value="UniProtKB"/>
</dbReference>
<dbReference type="GO" id="GO:0006357">
    <property type="term" value="P:regulation of transcription by RNA polymerase II"/>
    <property type="evidence" value="ECO:0000318"/>
    <property type="project" value="GO_Central"/>
</dbReference>
<dbReference type="GO" id="GO:0070562">
    <property type="term" value="P:regulation of vitamin D receptor signaling pathway"/>
    <property type="evidence" value="ECO:0007669"/>
    <property type="project" value="Ensembl"/>
</dbReference>
<dbReference type="GO" id="GO:0003406">
    <property type="term" value="P:retinal pigment epithelium development"/>
    <property type="evidence" value="ECO:0007669"/>
    <property type="project" value="Ensembl"/>
</dbReference>
<dbReference type="GO" id="GO:0051123">
    <property type="term" value="P:RNA polymerase II preinitiation complex assembly"/>
    <property type="evidence" value="ECO:0000303"/>
    <property type="project" value="ComplexPortal"/>
</dbReference>
<dbReference type="GO" id="GO:0006590">
    <property type="term" value="P:thyroid hormone generation"/>
    <property type="evidence" value="ECO:0007669"/>
    <property type="project" value="Ensembl"/>
</dbReference>
<dbReference type="GO" id="GO:0002154">
    <property type="term" value="P:thyroid hormone receptor signaling pathway"/>
    <property type="evidence" value="ECO:0000315"/>
    <property type="project" value="UniProtKB"/>
</dbReference>
<dbReference type="GO" id="GO:0003222">
    <property type="term" value="P:ventricular trabecula myocardium morphogenesis"/>
    <property type="evidence" value="ECO:0007669"/>
    <property type="project" value="Ensembl"/>
</dbReference>
<dbReference type="IDEAL" id="IID00173"/>
<dbReference type="InterPro" id="IPR051999">
    <property type="entry name" value="Mediator_complex_subunit_1"/>
</dbReference>
<dbReference type="InterPro" id="IPR019680">
    <property type="entry name" value="Mediator_Med1"/>
</dbReference>
<dbReference type="PANTHER" id="PTHR12881">
    <property type="entry name" value="MEDIATOR OF RNA POLYMERASE II TRANSCRIPTION SUBUNIT 1"/>
    <property type="match status" value="1"/>
</dbReference>
<dbReference type="PANTHER" id="PTHR12881:SF10">
    <property type="entry name" value="MEDIATOR OF RNA POLYMERASE II TRANSCRIPTION SUBUNIT 1"/>
    <property type="match status" value="1"/>
</dbReference>
<dbReference type="Pfam" id="PF10744">
    <property type="entry name" value="Med1"/>
    <property type="match status" value="1"/>
</dbReference>
<feature type="chain" id="PRO_0000058552" description="Mediator of RNA polymerase II transcription subunit 1">
    <location>
        <begin position="1"/>
        <end position="1581"/>
    </location>
</feature>
<feature type="region of interest" description="Interaction with the Mediator complex and THRA">
    <location>
        <begin position="1"/>
        <end position="670"/>
    </location>
</feature>
<feature type="region of interest" description="Interaction with ESR1">
    <location>
        <begin position="16"/>
        <end position="590"/>
    </location>
</feature>
<feature type="region of interest" description="Interaction with the Mediator complex">
    <location>
        <begin position="108"/>
        <end position="212"/>
    </location>
</feature>
<feature type="region of interest" description="Interaction with the Mediator complex">
    <location>
        <begin position="215"/>
        <end position="390"/>
    </location>
</feature>
<feature type="region of interest" description="Interaction with THRA">
    <location>
        <begin position="405"/>
        <end position="644"/>
    </location>
</feature>
<feature type="region of interest" description="Interaction with VDR">
    <location>
        <begin position="542"/>
        <end position="789"/>
    </location>
</feature>
<feature type="region of interest" description="Disordered" evidence="2">
    <location>
        <begin position="609"/>
        <end position="705"/>
    </location>
</feature>
<feature type="region of interest" description="Interaction with PPARGC1A and THRA" evidence="15">
    <location>
        <begin position="622"/>
        <end position="701"/>
    </location>
</feature>
<feature type="region of interest" description="Interaction with ESR1">
    <location>
        <begin position="656"/>
        <end position="1066"/>
    </location>
</feature>
<feature type="region of interest" description="Interaction with GATA1" evidence="24">
    <location>
        <begin position="681"/>
        <end position="715"/>
    </location>
</feature>
<feature type="region of interest" description="Disordered" evidence="2">
    <location>
        <begin position="792"/>
        <end position="820"/>
    </location>
</feature>
<feature type="region of interest" description="Disordered" evidence="2">
    <location>
        <begin position="874"/>
        <end position="893"/>
    </location>
</feature>
<feature type="region of interest" description="Disordered" evidence="2">
    <location>
        <begin position="948"/>
        <end position="1566"/>
    </location>
</feature>
<feature type="region of interest" description="Interaction with TP53" evidence="26">
    <location>
        <begin position="1249"/>
        <end position="1421"/>
    </location>
</feature>
<feature type="short sequence motif" description="LXXLL motif 1">
    <location>
        <begin position="604"/>
        <end position="608"/>
    </location>
</feature>
<feature type="short sequence motif" description="LXXLL motif 2">
    <location>
        <begin position="645"/>
        <end position="649"/>
    </location>
</feature>
<feature type="short sequence motif" description="Integrase domain-binding motif (IBM)" evidence="25">
    <location>
        <begin position="875"/>
        <end position="902"/>
    </location>
</feature>
<feature type="compositionally biased region" description="Pro residues" evidence="2">
    <location>
        <begin position="622"/>
        <end position="632"/>
    </location>
</feature>
<feature type="compositionally biased region" description="Polar residues" evidence="2">
    <location>
        <begin position="655"/>
        <end position="675"/>
    </location>
</feature>
<feature type="compositionally biased region" description="Basic and acidic residues" evidence="2">
    <location>
        <begin position="696"/>
        <end position="705"/>
    </location>
</feature>
<feature type="compositionally biased region" description="Polar residues" evidence="2">
    <location>
        <begin position="808"/>
        <end position="820"/>
    </location>
</feature>
<feature type="compositionally biased region" description="Basic and acidic residues" evidence="2">
    <location>
        <begin position="963"/>
        <end position="974"/>
    </location>
</feature>
<feature type="compositionally biased region" description="Low complexity" evidence="2">
    <location>
        <begin position="1034"/>
        <end position="1045"/>
    </location>
</feature>
<feature type="compositionally biased region" description="Low complexity" evidence="2">
    <location>
        <begin position="1078"/>
        <end position="1094"/>
    </location>
</feature>
<feature type="compositionally biased region" description="Low complexity" evidence="2">
    <location>
        <begin position="1101"/>
        <end position="1156"/>
    </location>
</feature>
<feature type="compositionally biased region" description="Polar residues" evidence="2">
    <location>
        <begin position="1162"/>
        <end position="1195"/>
    </location>
</feature>
<feature type="compositionally biased region" description="Low complexity" evidence="2">
    <location>
        <begin position="1218"/>
        <end position="1227"/>
    </location>
</feature>
<feature type="compositionally biased region" description="Low complexity" evidence="2">
    <location>
        <begin position="1234"/>
        <end position="1293"/>
    </location>
</feature>
<feature type="compositionally biased region" description="Polar residues" evidence="2">
    <location>
        <begin position="1330"/>
        <end position="1345"/>
    </location>
</feature>
<feature type="compositionally biased region" description="Basic and acidic residues" evidence="2">
    <location>
        <begin position="1352"/>
        <end position="1364"/>
    </location>
</feature>
<feature type="compositionally biased region" description="Polar residues" evidence="2">
    <location>
        <begin position="1425"/>
        <end position="1440"/>
    </location>
</feature>
<feature type="compositionally biased region" description="Polar residues" evidence="2">
    <location>
        <begin position="1448"/>
        <end position="1482"/>
    </location>
</feature>
<feature type="compositionally biased region" description="Basic residues" evidence="2">
    <location>
        <begin position="1496"/>
        <end position="1505"/>
    </location>
</feature>
<feature type="compositionally biased region" description="Basic and acidic residues" evidence="2">
    <location>
        <begin position="1506"/>
        <end position="1522"/>
    </location>
</feature>
<feature type="compositionally biased region" description="Polar residues" evidence="2">
    <location>
        <begin position="1533"/>
        <end position="1552"/>
    </location>
</feature>
<feature type="modified residue" description="Phosphoserine" evidence="38">
    <location>
        <position position="588"/>
    </location>
</feature>
<feature type="modified residue" description="Phosphoserine" evidence="31 35 36 38">
    <location>
        <position position="664"/>
    </location>
</feature>
<feature type="modified residue" description="Phosphoserine" evidence="30">
    <location>
        <position position="795"/>
    </location>
</feature>
<feature type="modified residue" description="Phosphothreonine" evidence="30 32 33 36 38">
    <location>
        <position position="805"/>
    </location>
</feature>
<feature type="modified residue" description="Phosphoserine" evidence="25">
    <location>
        <position position="887"/>
    </location>
</feature>
<feature type="modified residue" description="Phosphoserine" evidence="1">
    <location>
        <position position="953"/>
    </location>
</feature>
<feature type="modified residue" description="Phosphothreonine; by MAPK1 or MAPK3" evidence="20">
    <location>
        <position position="1032"/>
    </location>
</feature>
<feature type="modified residue" description="Phosphothreonine" evidence="31 35 37 38">
    <location>
        <position position="1051"/>
    </location>
</feature>
<feature type="modified residue" description="Phosphothreonine" evidence="30 31 32 35 36 38">
    <location>
        <position position="1057"/>
    </location>
</feature>
<feature type="modified residue" description="Phosphoserine" evidence="37 38">
    <location>
        <position position="1156"/>
    </location>
</feature>
<feature type="modified residue" description="N6-acetyllysine" evidence="34">
    <location>
        <position position="1177"/>
    </location>
</feature>
<feature type="modified residue" description="Phosphoserine" evidence="31 32 36 37 38">
    <location>
        <position position="1207"/>
    </location>
</feature>
<feature type="modified residue" description="Phosphothreonine" evidence="31 32 33 36 37 38">
    <location>
        <position position="1215"/>
    </location>
</feature>
<feature type="modified residue" description="Phosphoserine" evidence="37 38">
    <location>
        <position position="1223"/>
    </location>
</feature>
<feature type="modified residue" description="Phosphoserine" evidence="38">
    <location>
        <position position="1302"/>
    </location>
</feature>
<feature type="modified residue" description="Phosphoserine" evidence="36">
    <location>
        <position position="1347"/>
    </location>
</feature>
<feature type="modified residue" description="Phosphoserine" evidence="36">
    <location>
        <position position="1403"/>
    </location>
</feature>
<feature type="modified residue" description="Phosphoserine" evidence="36 38">
    <location>
        <position position="1433"/>
    </location>
</feature>
<feature type="modified residue" description="Phosphothreonine" evidence="38">
    <location>
        <position position="1440"/>
    </location>
</feature>
<feature type="modified residue" description="Phosphothreonine; by MAPK1 or MAPK3" evidence="20">
    <location>
        <position position="1457"/>
    </location>
</feature>
<feature type="modified residue" description="Phosphoserine" evidence="31 35 38">
    <location>
        <position position="1463"/>
    </location>
</feature>
<feature type="modified residue" description="Phosphoserine" evidence="1">
    <location>
        <position position="1465"/>
    </location>
</feature>
<feature type="modified residue" description="Phosphoserine" evidence="31 35 37 38">
    <location>
        <position position="1479"/>
    </location>
</feature>
<feature type="modified residue" description="Phosphoserine" evidence="31 35 38">
    <location>
        <position position="1481"/>
    </location>
</feature>
<feature type="modified residue" description="Phosphoserine" evidence="31 35 38">
    <location>
        <position position="1482"/>
    </location>
</feature>
<feature type="modified residue" description="N6-acetyllysine" evidence="34">
    <location>
        <position position="1529"/>
    </location>
</feature>
<feature type="splice variant" id="VSP_027906" description="In isoform 2." evidence="28">
    <original>YGMTTGNNP</original>
    <variation>SKNPELGSG</variation>
    <location>
        <begin position="548"/>
        <end position="556"/>
    </location>
</feature>
<feature type="splice variant" id="VSP_027907" description="In isoform 2." evidence="28">
    <location>
        <begin position="557"/>
        <end position="1581"/>
    </location>
</feature>
<feature type="sequence variant" id="VAR_053955" description="In dbSNP:rs1139825.">
    <original>P</original>
    <variation>T</variation>
    <location>
        <position position="753"/>
    </location>
</feature>
<feature type="sequence variant" id="VAR_034938" description="In dbSNP:rs35668211.">
    <original>S</original>
    <variation>G</variation>
    <location>
        <position position="1240"/>
    </location>
</feature>
<feature type="mutagenesis site" description="Enhances interaction with ESR1." evidence="10">
    <original>SQNPILTSLLQITG</original>
    <variation>EKHKILHRLLQDSS</variation>
    <location>
        <begin position="599"/>
        <end position="612"/>
    </location>
</feature>
<feature type="mutagenesis site" description="Enhances interaction with ESR1." evidence="14">
    <original>QNPILTSLLQITG</original>
    <variation>RHKILHRLLQEGS</variation>
    <location>
        <begin position="600"/>
        <end position="612"/>
    </location>
</feature>
<feature type="mutagenesis site" description="Impairs interaction with ESR2; when associated with A-607; A-645 and A-648." evidence="10">
    <original>L</original>
    <variation>A</variation>
    <location>
        <position position="604"/>
    </location>
</feature>
<feature type="mutagenesis site" description="Impairs interaction with ESR1, PPARG, RXRA and THRB. Impairs interaction with THRA; when associated with 648-A-A-649." evidence="8 9 14 15 17 27">
    <original>LL</original>
    <variation>AA</variation>
    <location>
        <begin position="607"/>
        <end position="608"/>
    </location>
</feature>
<feature type="mutagenesis site" description="Impairs interaction with ESR2; when associated with A-604; A-645 and A-648." evidence="10">
    <original>L</original>
    <variation>A</variation>
    <location>
        <position position="607"/>
    </location>
</feature>
<feature type="mutagenesis site" description="Enhances interaction with ESR1." evidence="14">
    <original>TKNHPMLMNLLKDNP</original>
    <variation>VSRHKILHRLLQEGS</variation>
    <location>
        <begin position="639"/>
        <end position="653"/>
    </location>
</feature>
<feature type="mutagenesis site" description="Impairs interaction with ESR2; when associated with A-604; A-607 and A-648." evidence="10">
    <original>L</original>
    <variation>A</variation>
    <location>
        <position position="645"/>
    </location>
</feature>
<feature type="mutagenesis site" description="Impairs interaction with ESR1, PPARG, THRB and VDR. Impairs interaction with THRA; when associated with 607-A-A-608." evidence="8 9 14 15 17 27">
    <original>LL</original>
    <variation>AA</variation>
    <location>
        <begin position="648"/>
        <end position="649"/>
    </location>
</feature>
<feature type="mutagenesis site" description="Impairs interaction with ESR2; when associated with A-604; A-607 and A-645." evidence="10">
    <original>L</original>
    <variation>A</variation>
    <location>
        <position position="648"/>
    </location>
</feature>
<feature type="mutagenesis site" description="Increased interaction with PSIP1; when associated with D-887 or D-887 and D-889." evidence="25">
    <original>S</original>
    <variation>D</variation>
    <location>
        <position position="886"/>
    </location>
</feature>
<feature type="mutagenesis site" description="Phosphomimetic mutant. Increased interaction with PSIP1; when associated with D-886 or D-886 and D-889." evidence="25">
    <original>S</original>
    <variation>D</variation>
    <location>
        <position position="887"/>
    </location>
</feature>
<feature type="mutagenesis site" description="Increased interaction with PSIP1; when associated with D-886 and D-887." evidence="25">
    <original>S</original>
    <variation>D</variation>
    <location>
        <position position="889"/>
    </location>
</feature>
<feature type="mutagenesis site" description="Enhances protein stability; when associated with A-1457." evidence="20">
    <original>T</original>
    <variation>A</variation>
    <location>
        <position position="1032"/>
    </location>
</feature>
<feature type="mutagenesis site" description="Enhances protein stability; when associated with A-1032." evidence="20">
    <original>T</original>
    <variation>A</variation>
    <location>
        <position position="1457"/>
    </location>
</feature>
<feature type="sequence conflict" description="In Ref. 1; CAA73867." evidence="29" ref="1">
    <original>R</original>
    <variation>G</variation>
    <location>
        <position position="86"/>
    </location>
</feature>
<feature type="sequence conflict" description="In Ref. 1; CAA73867." evidence="29" ref="1">
    <original>F</original>
    <variation>S</variation>
    <location>
        <position position="147"/>
    </location>
</feature>
<feature type="sequence conflict" description="In Ref. 1; CAA73867." evidence="29" ref="1">
    <original>DS</original>
    <variation>GL</variation>
    <location>
        <begin position="471"/>
        <end position="472"/>
    </location>
</feature>
<feature type="sequence conflict" description="In Ref. 1; CAA73867 and 7; AAF98352." evidence="29" ref="1 7">
    <original>P</original>
    <variation>S</variation>
    <location>
        <position position="563"/>
    </location>
</feature>
<feature type="sequence conflict" description="In Ref. 1; CAA73867 and 7; AAF98352." evidence="29" ref="1 7">
    <original>T</original>
    <variation>A</variation>
    <location>
        <position position="573"/>
    </location>
</feature>
<feature type="sequence conflict" description="In Ref. 5; AAH06517." evidence="29" ref="5">
    <original>D</original>
    <variation>N</variation>
    <location>
        <position position="651"/>
    </location>
</feature>
<feature type="sequence conflict" description="In Ref. 9; AAC41736." evidence="29" ref="9">
    <original>S</original>
    <variation>F</variation>
    <location>
        <position position="673"/>
    </location>
</feature>
<feature type="sequence conflict" description="In Ref. 9; AAC41736." evidence="29" ref="9">
    <location>
        <begin position="702"/>
        <end position="708"/>
    </location>
</feature>
<feature type="sequence conflict" description="In Ref. 2; AAC39854." evidence="29" ref="2">
    <original>N</original>
    <variation>K</variation>
    <location>
        <position position="721"/>
    </location>
</feature>
<feature type="sequence conflict" description="In Ref. 7; AAF98352." evidence="29" ref="7">
    <original>M</original>
    <variation>R</variation>
    <location>
        <position position="728"/>
    </location>
</feature>
<feature type="sequence conflict" description="In Ref. 5; AAH06517." evidence="29" ref="5">
    <original>VPHPQP</original>
    <variation>FYLTPQ</variation>
    <location>
        <begin position="756"/>
        <end position="761"/>
    </location>
</feature>
<feature type="sequence conflict" description="In Ref. 2; AAC39854." evidence="29" ref="2">
    <original>G</original>
    <variation>S</variation>
    <location>
        <position position="1388"/>
    </location>
</feature>
<feature type="helix" evidence="41">
    <location>
        <begin position="14"/>
        <end position="26"/>
    </location>
</feature>
<feature type="helix" evidence="41">
    <location>
        <begin position="34"/>
        <end position="45"/>
    </location>
</feature>
<feature type="helix" evidence="41">
    <location>
        <begin position="57"/>
        <end position="66"/>
    </location>
</feature>
<feature type="helix" evidence="41">
    <location>
        <begin position="67"/>
        <end position="69"/>
    </location>
</feature>
<feature type="helix" evidence="41">
    <location>
        <begin position="74"/>
        <end position="88"/>
    </location>
</feature>
<feature type="strand" evidence="41">
    <location>
        <begin position="91"/>
        <end position="98"/>
    </location>
</feature>
<feature type="strand" evidence="41">
    <location>
        <begin position="100"/>
        <end position="103"/>
    </location>
</feature>
<feature type="strand" evidence="41">
    <location>
        <begin position="108"/>
        <end position="111"/>
    </location>
</feature>
<feature type="helix" evidence="41">
    <location>
        <begin position="136"/>
        <end position="143"/>
    </location>
</feature>
<feature type="helix" evidence="41">
    <location>
        <begin position="147"/>
        <end position="160"/>
    </location>
</feature>
<feature type="helix" evidence="41">
    <location>
        <begin position="168"/>
        <end position="194"/>
    </location>
</feature>
<feature type="helix" evidence="41">
    <location>
        <begin position="199"/>
        <end position="204"/>
    </location>
</feature>
<feature type="strand" evidence="41">
    <location>
        <begin position="205"/>
        <end position="208"/>
    </location>
</feature>
<feature type="strand" evidence="41">
    <location>
        <begin position="210"/>
        <end position="212"/>
    </location>
</feature>
<feature type="strand" evidence="41">
    <location>
        <begin position="220"/>
        <end position="225"/>
    </location>
</feature>
<feature type="helix" evidence="41">
    <location>
        <begin position="228"/>
        <end position="231"/>
    </location>
</feature>
<feature type="strand" evidence="41">
    <location>
        <begin position="249"/>
        <end position="261"/>
    </location>
</feature>
<feature type="strand" evidence="41">
    <location>
        <begin position="268"/>
        <end position="271"/>
    </location>
</feature>
<feature type="strand" evidence="41">
    <location>
        <begin position="300"/>
        <end position="314"/>
    </location>
</feature>
<feature type="helix" evidence="41">
    <location>
        <begin position="315"/>
        <end position="325"/>
    </location>
</feature>
<feature type="helix" evidence="41">
    <location>
        <begin position="339"/>
        <end position="348"/>
    </location>
</feature>
<feature type="strand" evidence="41">
    <location>
        <begin position="362"/>
        <end position="366"/>
    </location>
</feature>
<feature type="strand" evidence="41">
    <location>
        <begin position="371"/>
        <end position="375"/>
    </location>
</feature>
<feature type="strand" evidence="41">
    <location>
        <begin position="389"/>
        <end position="400"/>
    </location>
</feature>
<feature type="helix" evidence="41">
    <location>
        <begin position="401"/>
        <end position="403"/>
    </location>
</feature>
<feature type="helix" evidence="41">
    <location>
        <begin position="404"/>
        <end position="422"/>
    </location>
</feature>
<feature type="strand" evidence="41">
    <location>
        <begin position="438"/>
        <end position="446"/>
    </location>
</feature>
<feature type="strand" evidence="41">
    <location>
        <begin position="449"/>
        <end position="455"/>
    </location>
</feature>
<feature type="strand" evidence="41">
    <location>
        <begin position="457"/>
        <end position="469"/>
    </location>
</feature>
<feature type="strand" evidence="41">
    <location>
        <begin position="471"/>
        <end position="473"/>
    </location>
</feature>
<feature type="strand" evidence="41">
    <location>
        <begin position="475"/>
        <end position="480"/>
    </location>
</feature>
<feature type="helix" evidence="41">
    <location>
        <begin position="491"/>
        <end position="501"/>
    </location>
</feature>
<feature type="helix" evidence="41">
    <location>
        <begin position="504"/>
        <end position="517"/>
    </location>
</feature>
<feature type="helix" evidence="40">
    <location>
        <begin position="639"/>
        <end position="641"/>
    </location>
</feature>
<feature type="helix" evidence="39">
    <location>
        <begin position="643"/>
        <end position="649"/>
    </location>
</feature>
<reference key="1">
    <citation type="journal article" date="1997" name="Oncogene">
        <title>Identification of RB18A, a 205 kDa new p53 regulatory protein which shares antigenic and functional properties with p53.</title>
        <authorList>
            <person name="Drane P."/>
            <person name="Barel M."/>
            <person name="Balbo M."/>
            <person name="Frade R."/>
        </authorList>
    </citation>
    <scope>NUCLEOTIDE SEQUENCE [MRNA] (ISOFORM 1)</scope>
    <scope>DNA-BINDING</scope>
    <scope>INTERACTION WITH TP53</scope>
    <scope>TISSUE SPECIFICITY</scope>
    <source>
        <tissue>Heart</tissue>
    </source>
</reference>
<reference key="2">
    <citation type="journal article" date="1998" name="Proc. Natl. Acad. Sci. U.S.A.">
        <title>The TRAP220 component of a thyroid hormone receptor-associated protein (TRAP) coactivator complex interacts directly with nuclear receptors in a ligand-dependent fashion.</title>
        <authorList>
            <person name="Yuan C.-X."/>
            <person name="Ito M."/>
            <person name="Fondell J.D."/>
            <person name="Fu Z.-Y."/>
            <person name="Roeder R.G."/>
        </authorList>
    </citation>
    <scope>NUCLEOTIDE SEQUENCE [MRNA] (ISOFORM 1)</scope>
    <scope>PROTEIN SEQUENCE OF 157-168; 943-952 AND 1432-1442</scope>
    <scope>FUNCTION</scope>
    <scope>INTERACTION WITH ESR1; PPARA; PPARG; RARA; RXRA; THRA AND VDR</scope>
    <scope>TISSUE SPECIFICITY</scope>
    <scope>MUTAGENESIS OF 607-LEU-LEU-608 AND 648-LEU-LEU-649</scope>
</reference>
<reference key="3">
    <citation type="journal article" date="1998" name="Proc. Natl. Acad. Sci. U.S.A.">
        <authorList>
            <person name="Yuan C.-X."/>
            <person name="Ito M."/>
            <person name="Fondell J.D."/>
            <person name="Fu Z.-Y."/>
            <person name="Roeder R.G."/>
        </authorList>
    </citation>
    <scope>ERRATUM OF PUBMED:9653119</scope>
</reference>
<reference key="4">
    <citation type="submission" date="2006-12" db="EMBL/GenBank/DDBJ databases">
        <authorList>
            <person name="Mural R.J."/>
            <person name="Istrail S."/>
            <person name="Sutton G.G."/>
            <person name="Florea L."/>
            <person name="Halpern A.L."/>
            <person name="Mobarry C.M."/>
            <person name="Lippert R."/>
            <person name="Walenz B."/>
            <person name="Shatkay H."/>
            <person name="Dew I."/>
            <person name="Miller J.R."/>
            <person name="Flanigan M.J."/>
            <person name="Edwards N.J."/>
            <person name="Bolanos R."/>
            <person name="Fasulo D."/>
            <person name="Halldorsson B.V."/>
            <person name="Hannenhalli S."/>
            <person name="Turner R."/>
            <person name="Yooseph S."/>
            <person name="Lu F."/>
            <person name="Nusskern D.R."/>
            <person name="Shue B.C."/>
            <person name="Zheng X.H."/>
            <person name="Zhong F."/>
            <person name="Delcher A.L."/>
            <person name="Huson D.H."/>
            <person name="Kravitz S.A."/>
            <person name="Mouchard L."/>
            <person name="Reinert K."/>
            <person name="Remington K.A."/>
            <person name="Clark A.G."/>
            <person name="Waterman M.S."/>
            <person name="Eichler E.E."/>
            <person name="Adams M.D."/>
            <person name="Hunkapiller M.W."/>
            <person name="Myers E.W."/>
            <person name="Venter J.C."/>
        </authorList>
    </citation>
    <scope>NUCLEOTIDE SEQUENCE [LARGE SCALE GENOMIC DNA]</scope>
</reference>
<reference key="5">
    <citation type="journal article" date="2004" name="Genome Res.">
        <title>The status, quality, and expansion of the NIH full-length cDNA project: the Mammalian Gene Collection (MGC).</title>
        <authorList>
            <consortium name="The MGC Project Team"/>
        </authorList>
    </citation>
    <scope>NUCLEOTIDE SEQUENCE [LARGE SCALE MRNA] (ISOFORMS 1 AND 2)</scope>
    <source>
        <tissue>Colon</tissue>
        <tissue>Testis</tissue>
    </source>
</reference>
<reference key="6">
    <citation type="journal article" date="1999" name="Nature">
        <title>Composite co-activator ARC mediates chromatin-directed transcriptional activation.</title>
        <authorList>
            <person name="Naeaer A.M."/>
            <person name="Beaurang P.A."/>
            <person name="Zhou S."/>
            <person name="Abraham S."/>
            <person name="Solomon W.B."/>
            <person name="Tjian R."/>
        </authorList>
    </citation>
    <scope>PROTEIN SEQUENCE OF 1-13 AND 1452-1464</scope>
    <scope>IDENTIFICATION IN THE ARC COMPLEX</scope>
</reference>
<reference key="7">
    <citation type="journal article" date="2000" name="Mol. Cell. Biol.">
        <title>The DRIP complex and SRC-1/p160 coactivators share similar nuclear receptor binding determinants but constitute functionally distinct complexes.</title>
        <authorList>
            <person name="Rachez C."/>
            <person name="Gamble M."/>
            <person name="Chang C.-P.B."/>
            <person name="Atkins G.B."/>
            <person name="Lazar M.A."/>
            <person name="Freedman L.P."/>
        </authorList>
    </citation>
    <scope>NUCLEOTIDE SEQUENCE [MRNA] OF 16-1581 (ISOFORM 1)</scope>
    <scope>INTERACTION WITH VDR</scope>
    <scope>MUTAGENESIS OF 607-LEU-LEU-608 AND 648-LEU-LEU-649</scope>
</reference>
<reference key="8">
    <citation type="journal article" date="1999" name="Nature">
        <title>Ligand-dependent transcription activation by nuclear receptors requires the DRIP complex.</title>
        <authorList>
            <person name="Rachez C."/>
            <person name="Lemon B.D."/>
            <person name="Suldan Z."/>
            <person name="Bromleigh V."/>
            <person name="Gamble M."/>
            <person name="Naeaer A.M."/>
            <person name="Erdjument-Bromage H."/>
            <person name="Tempst P."/>
            <person name="Freedman L.P."/>
        </authorList>
    </citation>
    <scope>PROTEIN SEQUENCE OF 307-315 AND 584-597</scope>
    <scope>IDENTIFICATION IN THE DRIP COMPLEX</scope>
    <scope>INTERACTION WITH VDR</scope>
    <source>
        <tissue>Cervix carcinoma</tissue>
    </source>
</reference>
<reference key="9">
    <citation type="journal article" date="1995" name="Mol. Endocrinol.">
        <title>Two classes of proteins dependent on either the presence or absence of thyroid hormone for interaction with the thyroid hormone receptor.</title>
        <authorList>
            <person name="Lee J.W."/>
            <person name="Choi H.-S."/>
            <person name="Gyuris J."/>
            <person name="Brent R."/>
            <person name="Moore D.D."/>
        </authorList>
    </citation>
    <scope>NUCLEOTIDE SEQUENCE [MRNA] OF 622-711</scope>
</reference>
<reference key="10">
    <citation type="journal article" date="1999" name="Mol. Cell">
        <title>A novel human SRB/MED-containing cofactor complex, SMCC, involved in transcription regulation.</title>
        <authorList>
            <person name="Gu W."/>
            <person name="Malik S."/>
            <person name="Ito M."/>
            <person name="Yuan C.-X."/>
            <person name="Fondell J.D."/>
            <person name="Zhang X."/>
            <person name="Martinez E."/>
            <person name="Qin J."/>
            <person name="Roeder R.G."/>
        </authorList>
    </citation>
    <scope>IDENTIFICATION BY MASS SPECTROMETRY</scope>
    <scope>IDENTIFICATION IN THE SMCC COMPLEX</scope>
</reference>
<reference key="11">
    <citation type="journal article" date="1999" name="Mol. Cell">
        <authorList>
            <person name="Gu W."/>
            <person name="Malik S."/>
            <person name="Ito M."/>
            <person name="Yuan C.-X."/>
            <person name="Fondell J.D."/>
            <person name="Zhang X."/>
            <person name="Martinez E."/>
            <person name="Qin J."/>
            <person name="Roeder R.G."/>
        </authorList>
    </citation>
    <scope>ERRATUM OF PUBMED:10024883</scope>
</reference>
<reference key="12">
    <citation type="journal article" date="1999" name="Mol. Endocrinol.">
        <title>Identification of mouse TRAP100: a transcriptional coregulatory factor for thyroid hormone and vitamin D receptors.</title>
        <authorList>
            <person name="Zhang J."/>
            <person name="Fondell J.D."/>
        </authorList>
    </citation>
    <scope>FUNCTION</scope>
    <scope>INTERACTION WITH MED24; THRA; THRB AND VDR</scope>
</reference>
<reference key="13">
    <citation type="journal article" date="1999" name="Mol. Endocrinol.">
        <title>Coactivators for the orphan nuclear receptor RORalpha.</title>
        <authorList>
            <person name="Atkins G.B."/>
            <person name="Hu X."/>
            <person name="Guenther M.G."/>
            <person name="Rachez C."/>
            <person name="Freedman L.P."/>
            <person name="Lazar M.A."/>
        </authorList>
    </citation>
    <scope>INTERACTION WITH RORA</scope>
</reference>
<reference key="14">
    <citation type="journal article" date="2000" name="J. Biol. Chem.">
        <title>Functional interactions between the estrogen receptor and DRIP205, a subunit of the heteromeric DRIP coactivator complex.</title>
        <authorList>
            <person name="Burakov D."/>
            <person name="Wong C.-W."/>
            <person name="Rachez C."/>
            <person name="Cheskis B.J."/>
            <person name="Freedman L.P."/>
        </authorList>
    </citation>
    <scope>INTERACTION WITH ESR1; ESR2 AND VDR</scope>
    <scope>MUTAGENESIS OF 607-LEU-LEU-608 AND 648-LEU-LEU-649</scope>
</reference>
<reference key="15">
    <citation type="journal article" date="2001" name="J. Biol. Chem.">
        <title>Differential recruitment of the mammalian mediator subunit TRAP220 by estrogen receptors ERalpha and ERbeta.</title>
        <authorList>
            <person name="Waernmark A."/>
            <person name="Almloef T."/>
            <person name="Leers J."/>
            <person name="Gustafsson J.-A."/>
            <person name="Treuter E."/>
        </authorList>
    </citation>
    <scope>INTERACTION WITH ESR1 AND ESR2</scope>
    <scope>MUTAGENESIS OF 599-SER--GLY-612; LEU-604; LEU-607; LEU-645 AND LEU-648</scope>
</reference>
<reference key="16">
    <citation type="journal article" date="2002" name="J. Biol. Chem.">
        <title>A coregulatory role for the TRAP-mediator complex in androgen receptor-mediated gene expression.</title>
        <authorList>
            <person name="Wang Q."/>
            <person name="Sharma D."/>
            <person name="Ren Y."/>
            <person name="Fondell J.D."/>
        </authorList>
    </citation>
    <scope>FUNCTION</scope>
    <scope>INTERACTION WITH AR</scope>
    <scope>ASSOCIATION WITH PROMOTER REGIONS</scope>
</reference>
<reference key="17">
    <citation type="journal article" date="2002" name="Nature">
        <title>Transcription coactivator TRAP220 is required for PPAR gamma 2-stimulated adipogenesis.</title>
        <authorList>
            <person name="Ge K."/>
            <person name="Guermah M."/>
            <person name="Yuan C.-X."/>
            <person name="Ito M."/>
            <person name="Wallberg A.E."/>
            <person name="Spiegelman B.M."/>
            <person name="Roeder R.G."/>
        </authorList>
    </citation>
    <scope>FUNCTION</scope>
    <scope>INTERACTION OF THE MEDIATOR COMPLEX WITH PPARG</scope>
</reference>
<reference key="18">
    <citation type="journal article" date="2002" name="Proc. Natl. Acad. Sci. U.S.A.">
        <title>The TRAP/Mediator coactivator complex interacts directly with estrogen receptors alpha and beta through the TRAP220 subunit and directly enhances estrogen receptor function in vitro.</title>
        <authorList>
            <person name="Kang Y.K."/>
            <person name="Guermah M."/>
            <person name="Yuan C.-X."/>
            <person name="Roeder R.G."/>
        </authorList>
    </citation>
    <scope>FUNCTION</scope>
    <scope>IDENTIFICATION BY MASS SPECTROMETRY</scope>
    <scope>IDENTIFICATION IN THE MEDIATOR COMPLEX</scope>
    <scope>INTERACTION OF THE MEDIATOR COMPLEX WITH ESR1 AND ESR2</scope>
</reference>
<reference key="19">
    <citation type="journal article" date="2002" name="Proc. Natl. Acad. Sci. U.S.A.">
        <title>Ordered recruitment of histone acetyltransferases and the TRAP/Mediator complex to thyroid hormone-responsive promoters in vivo.</title>
        <authorList>
            <person name="Sharma D."/>
            <person name="Fondell J.D."/>
        </authorList>
    </citation>
    <scope>ASSOCIATION WITH PROMOTER REGIONS</scope>
</reference>
<reference key="20">
    <citation type="journal article" date="2003" name="J. Biol. Chem.">
        <title>An extended LXXLL motif sequence determines the nuclear receptor binding specificity of TRAP220.</title>
        <authorList>
            <person name="Coulthard V.H."/>
            <person name="Matsuda S."/>
            <person name="Heery D.M."/>
        </authorList>
    </citation>
    <scope>FUNCTION</scope>
    <scope>INTERACTION WITH ESR1; PPARG; RARA; RXRA AND THRB</scope>
    <scope>MUTAGENESIS OF 600-GLN--SER-612; 607-LEU-LEU-608; 639-THR--PRO-653 AND 648-LEU-LEU-649</scope>
</reference>
<reference key="21">
    <citation type="journal article" date="2003" name="Mol. Cell">
        <title>Coordination of p300-mediated chromatin remodeling and TRAP/mediator function through coactivator PGC-1alpha.</title>
        <authorList>
            <person name="Wallberg A.E."/>
            <person name="Yamamura S."/>
            <person name="Malik S."/>
            <person name="Spiegelman B.M."/>
            <person name="Roeder R.G."/>
        </authorList>
    </citation>
    <scope>FUNCTION</scope>
    <scope>INTERACTION WITH PPARGC1A</scope>
    <scope>MUTAGENESIS OF 607-LEU-LEU-608 AND 648-LEU-LEU-649</scope>
</reference>
<reference key="22">
    <citation type="journal article" date="2004" name="J. Biol. Chem.">
        <title>Vitamin D-interacting protein 205 (DRIP205) coactivation of estrogen receptor alpha (ERalpha) involves multiple domains of both proteins.</title>
        <authorList>
            <person name="Wu Q."/>
            <person name="Burghardt R."/>
            <person name="Safe S."/>
        </authorList>
    </citation>
    <scope>FUNCTION</scope>
    <scope>INTERACTION WITH ESR1</scope>
    <scope>SUBCELLULAR LOCATION</scope>
</reference>
<reference key="23">
    <citation type="journal article" date="2004" name="Mol. Cell">
        <title>A set of consensus mammalian mediator subunits identified by multidimensional protein identification technology.</title>
        <authorList>
            <person name="Sato S."/>
            <person name="Tomomori-Sato C."/>
            <person name="Parmely T.J."/>
            <person name="Florens L."/>
            <person name="Zybailov B."/>
            <person name="Swanson S.K."/>
            <person name="Banks C.A.S."/>
            <person name="Jin J."/>
            <person name="Cai Y."/>
            <person name="Washburn M.P."/>
            <person name="Conaway J.W."/>
            <person name="Conaway R.C."/>
        </authorList>
    </citation>
    <scope>IDENTIFICATION BY MASS SPECTROMETRY</scope>
    <scope>IDENTIFICATION IN THE MEDIATOR COMPLEX</scope>
</reference>
<reference key="24">
    <citation type="journal article" date="2004" name="Mol. Cell. Biol.">
        <title>Structural and functional organization of TRAP220, the TRAP/mediator subunit that is targeted by nuclear receptors.</title>
        <authorList>
            <person name="Malik S."/>
            <person name="Guermah M."/>
            <person name="Yuan C.-X."/>
            <person name="Wu W."/>
            <person name="Yamamura S."/>
            <person name="Roeder R.G."/>
        </authorList>
    </citation>
    <scope>FUNCTION</scope>
    <scope>INTERACTION OF THE MEDIATOR COMPLEX WITH THRA</scope>
    <scope>MUTAGENESIS OF 607-LEU-LEU-608 AND 648-LEU-LEU-649</scope>
</reference>
<reference key="25">
    <citation type="journal article" date="2005" name="Mol. Cell">
        <title>MED1/TRAP220 exists predominantly in a TRAP/Mediator subpopulation enriched in RNA polymerase II and is required for ER-mediated transcription.</title>
        <authorList>
            <person name="Zhang X."/>
            <person name="Krutchinsky A."/>
            <person name="Fukuda A."/>
            <person name="Chen W."/>
            <person name="Yamamura S."/>
            <person name="Chait B.T."/>
            <person name="Roeder R.G."/>
        </authorList>
    </citation>
    <scope>FUNCTION</scope>
    <scope>ASSOCIATION WITH PROMOTER REGIONS</scope>
    <scope>INTERACTION WITH CCNC; MED6; MED10; MED11; MED12; MED13; MED14; MED15; MED16; MED17; MED18; MED19; MED20; MED21; MED23; MED24; MED25; MED26; MED28; MED29 AND MED30</scope>
    <scope>IDENTIFICATION BY MASS SPECTROMETRY</scope>
    <scope>IDENTIFICATION IN THE MEDIATOR COMPLEX</scope>
    <scope>ASSOCIATION OF THE MEDIATOR COMPLEX WITH RNA POLYMERASE II</scope>
</reference>
<reference key="26">
    <citation type="journal article" date="2005" name="Mol. Cell. Biol.">
        <title>Activation of TRAP/mediator subunit TRAP220/Med1 is regulated by mitogen-activated protein kinase-dependent phosphorylation.</title>
        <authorList>
            <person name="Pandey P.K."/>
            <person name="Udayakumar T.S."/>
            <person name="Lin X."/>
            <person name="Sharma D."/>
            <person name="Shapiro P.S."/>
            <person name="Fondell J.D."/>
        </authorList>
    </citation>
    <scope>SUBCELLULAR LOCATION</scope>
    <scope>PHOSPHORYLATION AT THR-1032 AND THR-1457</scope>
    <scope>MUTAGENESIS OF THR-1032 AND THR-1457</scope>
</reference>
<reference key="27">
    <citation type="journal article" date="2006" name="Cell">
        <title>Global, in vivo, and site-specific phosphorylation dynamics in signaling networks.</title>
        <authorList>
            <person name="Olsen J.V."/>
            <person name="Blagoev B."/>
            <person name="Gnad F."/>
            <person name="Macek B."/>
            <person name="Kumar C."/>
            <person name="Mortensen P."/>
            <person name="Mann M."/>
        </authorList>
    </citation>
    <scope>IDENTIFICATION BY MASS SPECTROMETRY [LARGE SCALE ANALYSIS]</scope>
    <source>
        <tissue>Cervix carcinoma</tissue>
    </source>
</reference>
<reference key="28">
    <citation type="journal article" date="2006" name="J. Biol. Chem.">
        <title>Regulation of Aurora-A kinase gene expression via GABP recruitment of TRAP220/MED1.</title>
        <authorList>
            <person name="Udayakumar T.S."/>
            <person name="Belakavadi M."/>
            <person name="Choi K.-H."/>
            <person name="Pandey P.K."/>
            <person name="Fondell J.D."/>
        </authorList>
    </citation>
    <scope>FUNCTION</scope>
    <scope>INTERACTION WITH GABPA</scope>
    <scope>ASSOCIATION WITH PROMOTER REGIONS</scope>
    <scope>SUBCELLULAR LOCATION</scope>
</reference>
<reference key="29">
    <citation type="journal article" date="2006" name="Mol. Cell. Biol.">
        <title>Mediator modulates Gli3-dependent Sonic hedgehog signaling.</title>
        <authorList>
            <person name="Zhou H."/>
            <person name="Kim S."/>
            <person name="Ishii S."/>
            <person name="Boyer T.G."/>
        </authorList>
    </citation>
    <scope>INTERACTION WITH CDK8</scope>
</reference>
<reference key="30">
    <citation type="journal article" date="2006" name="Nat. Biotechnol.">
        <title>A probability-based approach for high-throughput protein phosphorylation analysis and site localization.</title>
        <authorList>
            <person name="Beausoleil S.A."/>
            <person name="Villen J."/>
            <person name="Gerber S.A."/>
            <person name="Rush J."/>
            <person name="Gygi S.P."/>
        </authorList>
    </citation>
    <scope>PHOSPHORYLATION [LARGE SCALE ANALYSIS] AT SER-795; THR-805 AND THR-1057</scope>
    <scope>IDENTIFICATION BY MASS SPECTROMETRY [LARGE SCALE ANALYSIS]</scope>
    <source>
        <tissue>Cervix carcinoma</tissue>
    </source>
</reference>
<reference key="31">
    <citation type="journal article" date="2007" name="Science">
        <title>ATM and ATR substrate analysis reveals extensive protein networks responsive to DNA damage.</title>
        <authorList>
            <person name="Matsuoka S."/>
            <person name="Ballif B.A."/>
            <person name="Smogorzewska A."/>
            <person name="McDonald E.R. III"/>
            <person name="Hurov K.E."/>
            <person name="Luo J."/>
            <person name="Bakalarski C.E."/>
            <person name="Zhao Z."/>
            <person name="Solimini N."/>
            <person name="Lerenthal Y."/>
            <person name="Shiloh Y."/>
            <person name="Gygi S.P."/>
            <person name="Elledge S.J."/>
        </authorList>
    </citation>
    <scope>IDENTIFICATION BY MASS SPECTROMETRY [LARGE SCALE ANALYSIS]</scope>
    <source>
        <tissue>Embryonic kidney</tissue>
    </source>
</reference>
<reference key="32">
    <citation type="journal article" date="2008" name="Mol. Cell">
        <title>Kinase-selective enrichment enables quantitative phosphoproteomics of the kinome across the cell cycle.</title>
        <authorList>
            <person name="Daub H."/>
            <person name="Olsen J.V."/>
            <person name="Bairlein M."/>
            <person name="Gnad F."/>
            <person name="Oppermann F.S."/>
            <person name="Korner R."/>
            <person name="Greff Z."/>
            <person name="Keri G."/>
            <person name="Stemmann O."/>
            <person name="Mann M."/>
        </authorList>
    </citation>
    <scope>PHOSPHORYLATION [LARGE SCALE ANALYSIS] AT THR-805; THR-1057; SER-1207 AND THR-1215</scope>
    <scope>IDENTIFICATION BY MASS SPECTROMETRY [LARGE SCALE ANALYSIS]</scope>
    <source>
        <tissue>Cervix carcinoma</tissue>
    </source>
</reference>
<reference key="33">
    <citation type="journal article" date="2008" name="Proc. Natl. Acad. Sci. U.S.A.">
        <title>A quantitative atlas of mitotic phosphorylation.</title>
        <authorList>
            <person name="Dephoure N."/>
            <person name="Zhou C."/>
            <person name="Villen J."/>
            <person name="Beausoleil S.A."/>
            <person name="Bakalarski C.E."/>
            <person name="Elledge S.J."/>
            <person name="Gygi S.P."/>
        </authorList>
    </citation>
    <scope>PHOSPHORYLATION [LARGE SCALE ANALYSIS] AT SER-664; THR-1051; THR-1057; SER-1207; THR-1215; SER-1463; SER-1479; SER-1481 AND SER-1482</scope>
    <scope>IDENTIFICATION BY MASS SPECTROMETRY [LARGE SCALE ANALYSIS]</scope>
    <source>
        <tissue>Cervix carcinoma</tissue>
    </source>
</reference>
<reference key="34">
    <citation type="journal article" date="2009" name="Anal. Chem.">
        <title>Lys-N and trypsin cover complementary parts of the phosphoproteome in a refined SCX-based approach.</title>
        <authorList>
            <person name="Gauci S."/>
            <person name="Helbig A.O."/>
            <person name="Slijper M."/>
            <person name="Krijgsveld J."/>
            <person name="Heck A.J."/>
            <person name="Mohammed S."/>
        </authorList>
    </citation>
    <scope>IDENTIFICATION BY MASS SPECTROMETRY [LARGE SCALE ANALYSIS]</scope>
</reference>
<reference key="35">
    <citation type="journal article" date="2009" name="Mol. Cell. Proteomics">
        <title>Large-scale proteomics analysis of the human kinome.</title>
        <authorList>
            <person name="Oppermann F.S."/>
            <person name="Gnad F."/>
            <person name="Olsen J.V."/>
            <person name="Hornberger R."/>
            <person name="Greff Z."/>
            <person name="Keri G."/>
            <person name="Mann M."/>
            <person name="Daub H."/>
        </authorList>
    </citation>
    <scope>PHOSPHORYLATION [LARGE SCALE ANALYSIS] AT THR-805 AND THR-1215</scope>
    <scope>IDENTIFICATION BY MASS SPECTROMETRY [LARGE SCALE ANALYSIS]</scope>
</reference>
<reference key="36">
    <citation type="journal article" date="2009" name="Mol. Pharmacol.">
        <title>The basic helix-loop-helix proteins differentiated embryo chondrocyte (DEC) 1 and DEC2 function as corepressors of retinoid X receptors.</title>
        <authorList>
            <person name="Cho Y."/>
            <person name="Noshiro M."/>
            <person name="Choi M."/>
            <person name="Morita K."/>
            <person name="Kawamoto T."/>
            <person name="Fujimoto K."/>
            <person name="Kato Y."/>
            <person name="Makishima M."/>
        </authorList>
    </citation>
    <scope>INTERACTION WITH RXRA</scope>
</reference>
<reference key="37">
    <citation type="journal article" date="2009" name="Sci. Signal.">
        <title>Quantitative phosphoproteomic analysis of T cell receptor signaling reveals system-wide modulation of protein-protein interactions.</title>
        <authorList>
            <person name="Mayya V."/>
            <person name="Lundgren D.H."/>
            <person name="Hwang S.-I."/>
            <person name="Rezaul K."/>
            <person name="Wu L."/>
            <person name="Eng J.K."/>
            <person name="Rodionov V."/>
            <person name="Han D.K."/>
        </authorList>
    </citation>
    <scope>PHOSPHORYLATION [LARGE SCALE ANALYSIS] AT SER-664; THR-1051; THR-1057; SER-1463; SER-1479; SER-1481 AND SER-1482</scope>
    <scope>IDENTIFICATION BY MASS SPECTROMETRY [LARGE SCALE ANALYSIS]</scope>
    <source>
        <tissue>Leukemic T-cell</tissue>
    </source>
</reference>
<reference key="38">
    <citation type="journal article" date="2009" name="Science">
        <title>Lysine acetylation targets protein complexes and co-regulates major cellular functions.</title>
        <authorList>
            <person name="Choudhary C."/>
            <person name="Kumar C."/>
            <person name="Gnad F."/>
            <person name="Nielsen M.L."/>
            <person name="Rehman M."/>
            <person name="Walther T.C."/>
            <person name="Olsen J.V."/>
            <person name="Mann M."/>
        </authorList>
    </citation>
    <scope>ACETYLATION [LARGE SCALE ANALYSIS] AT LYS-1177 AND LYS-1529</scope>
    <scope>IDENTIFICATION BY MASS SPECTROMETRY [LARGE SCALE ANALYSIS]</scope>
</reference>
<reference key="39">
    <citation type="journal article" date="2010" name="Sci. Signal.">
        <title>Quantitative phosphoproteomics reveals widespread full phosphorylation site occupancy during mitosis.</title>
        <authorList>
            <person name="Olsen J.V."/>
            <person name="Vermeulen M."/>
            <person name="Santamaria A."/>
            <person name="Kumar C."/>
            <person name="Miller M.L."/>
            <person name="Jensen L.J."/>
            <person name="Gnad F."/>
            <person name="Cox J."/>
            <person name="Jensen T.S."/>
            <person name="Nigg E.A."/>
            <person name="Brunak S."/>
            <person name="Mann M."/>
        </authorList>
    </citation>
    <scope>PHOSPHORYLATION [LARGE SCALE ANALYSIS] AT SER-664; THR-805; THR-1057; SER-1207; THR-1215; SER-1347; SER-1403 AND SER-1433</scope>
    <scope>IDENTIFICATION BY MASS SPECTROMETRY [LARGE SCALE ANALYSIS]</scope>
    <source>
        <tissue>Cervix carcinoma</tissue>
    </source>
</reference>
<reference key="40">
    <citation type="journal article" date="2011" name="BMC Syst. Biol.">
        <title>Initial characterization of the human central proteome.</title>
        <authorList>
            <person name="Burkard T.R."/>
            <person name="Planyavsky M."/>
            <person name="Kaupe I."/>
            <person name="Breitwieser F.P."/>
            <person name="Buerckstuemmer T."/>
            <person name="Bennett K.L."/>
            <person name="Superti-Furga G."/>
            <person name="Colinge J."/>
        </authorList>
    </citation>
    <scope>IDENTIFICATION BY MASS SPECTROMETRY [LARGE SCALE ANALYSIS]</scope>
</reference>
<reference key="41">
    <citation type="journal article" date="2011" name="Sci. Signal.">
        <title>System-wide temporal characterization of the proteome and phosphoproteome of human embryonic stem cell differentiation.</title>
        <authorList>
            <person name="Rigbolt K.T."/>
            <person name="Prokhorova T.A."/>
            <person name="Akimov V."/>
            <person name="Henningsen J."/>
            <person name="Johansen P.T."/>
            <person name="Kratchmarova I."/>
            <person name="Kassem M."/>
            <person name="Mann M."/>
            <person name="Olsen J.V."/>
            <person name="Blagoev B."/>
        </authorList>
    </citation>
    <scope>PHOSPHORYLATION [LARGE SCALE ANALYSIS] AT THR-1051; SER-1156; SER-1207; THR-1215; SER-1223 AND SER-1479</scope>
    <scope>IDENTIFICATION BY MASS SPECTROMETRY [LARGE SCALE ANALYSIS]</scope>
</reference>
<reference key="42">
    <citation type="journal article" date="2013" name="J. Proteome Res.">
        <title>Toward a comprehensive characterization of a human cancer cell phosphoproteome.</title>
        <authorList>
            <person name="Zhou H."/>
            <person name="Di Palma S."/>
            <person name="Preisinger C."/>
            <person name="Peng M."/>
            <person name="Polat A.N."/>
            <person name="Heck A.J."/>
            <person name="Mohammed S."/>
        </authorList>
    </citation>
    <scope>PHOSPHORYLATION [LARGE SCALE ANALYSIS] AT SER-588; SER-664; THR-805; THR-1051; THR-1057; SER-1156; SER-1207; THR-1215; SER-1223; SER-1302; SER-1433; THR-1440; SER-1463; SER-1479; SER-1481 AND SER-1482</scope>
    <scope>IDENTIFICATION BY MASS SPECTROMETRY [LARGE SCALE ANALYSIS]</scope>
    <source>
        <tissue>Cervix carcinoma</tissue>
        <tissue>Erythroleukemia</tissue>
    </source>
</reference>
<reference key="43">
    <citation type="journal article" date="2014" name="Genes Cells">
        <title>CCAR1/CoCoA pair-mediated recruitment of the Mediator defines a novel pathway for GATA1 function.</title>
        <authorList>
            <person name="Mizuta S."/>
            <person name="Minami T."/>
            <person name="Fujita H."/>
            <person name="Kaminaga C."/>
            <person name="Matsui K."/>
            <person name="Ishino R."/>
            <person name="Fujita A."/>
            <person name="Oda K."/>
            <person name="Kawai A."/>
            <person name="Hasegawa N."/>
            <person name="Urahama N."/>
            <person name="Roeder R.G."/>
            <person name="Ito M."/>
        </authorList>
    </citation>
    <scope>FUNCTION</scope>
    <scope>INTERACTION WITH GATA1 AND CCAR1</scope>
</reference>
<reference key="44">
    <citation type="journal article" date="2014" name="J. Proteomics">
        <title>An enzyme assisted RP-RPLC approach for in-depth analysis of human liver phosphoproteome.</title>
        <authorList>
            <person name="Bian Y."/>
            <person name="Song C."/>
            <person name="Cheng K."/>
            <person name="Dong M."/>
            <person name="Wang F."/>
            <person name="Huang J."/>
            <person name="Sun D."/>
            <person name="Wang L."/>
            <person name="Ye M."/>
            <person name="Zou H."/>
        </authorList>
    </citation>
    <scope>IDENTIFICATION BY MASS SPECTROMETRY [LARGE SCALE ANALYSIS]</scope>
    <source>
        <tissue>Liver</tissue>
    </source>
</reference>
<reference key="45">
    <citation type="journal article" date="2018" name="Proc. Natl. Acad. Sci. U.S.A.">
        <title>Affinity switching of the LEDGF/p75 IBD interactome is governed by kinase-dependent phosphorylation.</title>
        <authorList>
            <person name="Sharma S."/>
            <person name="Cermakova K."/>
            <person name="De Rijck J."/>
            <person name="Demeulemeester J."/>
            <person name="Fabry M."/>
            <person name="El Ashkar S."/>
            <person name="Van Belle S."/>
            <person name="Lepsik M."/>
            <person name="Tesina P."/>
            <person name="Duchoslav V."/>
            <person name="Novak P."/>
            <person name="Hubalek M."/>
            <person name="Srb P."/>
            <person name="Christ F."/>
            <person name="Rezacova P."/>
            <person name="Hodges H.C."/>
            <person name="Debyser Z."/>
            <person name="Veverka V."/>
        </authorList>
    </citation>
    <scope>PHOSPHORYLATION AT SER-887</scope>
    <scope>INTERACTION WITH PSIP1</scope>
    <scope>DOMAIN IBM MOTIF</scope>
    <scope>MUTAGENESIS OF SER-886; SER-887 AND SER-889</scope>
</reference>
<organism>
    <name type="scientific">Homo sapiens</name>
    <name type="common">Human</name>
    <dbReference type="NCBI Taxonomy" id="9606"/>
    <lineage>
        <taxon>Eukaryota</taxon>
        <taxon>Metazoa</taxon>
        <taxon>Chordata</taxon>
        <taxon>Craniata</taxon>
        <taxon>Vertebrata</taxon>
        <taxon>Euteleostomi</taxon>
        <taxon>Mammalia</taxon>
        <taxon>Eutheria</taxon>
        <taxon>Euarchontoglires</taxon>
        <taxon>Primates</taxon>
        <taxon>Haplorrhini</taxon>
        <taxon>Catarrhini</taxon>
        <taxon>Hominidae</taxon>
        <taxon>Homo</taxon>
    </lineage>
</organism>
<protein>
    <recommendedName>
        <fullName>Mediator of RNA polymerase II transcription subunit 1</fullName>
    </recommendedName>
    <alternativeName>
        <fullName>Activator-recruited cofactor 205 kDa component</fullName>
        <shortName>ARC205</shortName>
    </alternativeName>
    <alternativeName>
        <fullName>Mediator complex subunit 1</fullName>
    </alternativeName>
    <alternativeName>
        <fullName>Peroxisome proliferator-activated receptor-binding protein</fullName>
        <shortName>PBP</shortName>
        <shortName>PPAR-binding protein</shortName>
    </alternativeName>
    <alternativeName>
        <fullName>Thyroid hormone receptor-associated protein complex 220 kDa component</fullName>
        <shortName>Trap220</shortName>
    </alternativeName>
    <alternativeName>
        <fullName>Thyroid receptor-interacting protein 2</fullName>
        <shortName>TR-interacting protein 2</shortName>
        <shortName>TRIP-2</shortName>
    </alternativeName>
    <alternativeName>
        <fullName>Vitamin D receptor-interacting protein complex component DRIP205</fullName>
    </alternativeName>
    <alternativeName>
        <fullName>p53 regulatory protein RB18A</fullName>
    </alternativeName>
</protein>
<proteinExistence type="evidence at protein level"/>
<sequence>MKAQGETEESEKLSKMSSLLERLHAKFNQNRPWSETIKLVRQVMEKRVVMSSGGHQHLVSCLETLQKALKVTSLPAMTDRLESIARQNGLGSHLSASGTECYITSDMFYVEVQLDPAGQLCDVKVAHHGENPVSCPELVQQLREKNFDEFSKHLKGLVNLYNLPGDNKLKTKMYLALQSLEQDLSKMAIMYWKATNAGPLDKILHGSVGYLTPRSGGHLMNLKYYVSPSDLLDDKTASPIILHENNVSRSLGMNASVTIEGTSAVYKLPIAPLIMGSHPVDNKWTPSFSSITSANSVDLPACFFLKFPQPIPVSRAFVQKLQNCTGIPLFETQPTYAPLYELITQFELSKDPDPIPLNHNMRFYAALPGQQHCYFLNKDAPLPDGRSLQGTLVSKITFQHPGRVPLILNLIRHQVAYNTLIGSCVKRTILKEDSPGLLQFEVCPLSESRFSVSFQHPVNDSLVCVVMDVQDSTHVSCKLYKGLSDALICTDDFIAKVVQRCMSIPVTMRAIRRKAETIQADTPALSLIAETVEDMVKKNLPPASSPGYGMTTGNNPMSGTTTPTNTFPGGPITTLFNMSMSIKDRHESVGHGEDFSKVSQNPILTSLLQITGNGGSTIGSSPTPPHHTPPPVSSMAGNTKNHPMLMNLLKDNPAQDFSTLYGSSPLERQNSSSGSPRMEICSGSNKTKKKKSSRLPPEKPKHQTEDDFQRELFSMDVDSQNPIFDVNMTADTLDTPHITPAPSQCSTPPTTYPQPVPHPQPSIQRMVRLSSSDSIGPDVTDILSDIAEEASKLPSTSDDCPAIGTPLRDSSSSGHSQSTLFDSDVFQTNNNENPYTDPADLIADAAGSPSSDSPTNHFFHDGVDFNPDLLNSQSQSGFGEEYFDESSQSGDNDDFKGFASQALNTLGVPMLGGDNGETKFKGNNQADTVDFSIISVAGKALAPADLMEHHSGSQGPLLTTGDLGKEKTQKRVKEGNGTSNSTLSGPGLDSKPGKRSRTPSNDGKSKDKPPKRKKADTEGKSPSHSSSNRPFTPPTSTGGSKSPGSAGRSQTPPGVATPPIPKITIQIPKGTVMVGKPSSHSQYTSSGSVSSSGSKSHHSHSSSSSSSASTSGKMKSSKSEGSSSSKLSSSMYSSQGSSGSSQSKNSSQSGGKPGSSPITKHGLSSGSSSTKMKPQGKPSSLMNPSLSKPNISPSHSRPPGGSDKLASPMKPVPGTPPSSKAKSPISSGSGGSHMSGTSSSSGMKSSSGLGSSGSLSQKTPPSSNSCTASSSSFSSSGSSMSSSQNQHGSSKGKSPSRNKKPSLTAVIDKLKHGVVTSGPGGEDPLDGQMGVSTNSSSHPMSSKHNMSGGEFQGKREKSDKDKSKVSTSGSSVDSSKKTSESKNVGSTGVAKIIISKHDGGSPSIKAKVTLQKPGESSGEGLRPQMASSKNYGSPLISGSTPKHERGSPSHSKSPAYTPQNLDSESESGSSIAEKSYQNSPSSDDGIRPLPEYSTEKHKKHKKEKKKVKDKDRDRDRDKDRDKKKSHSIKPESWSKSPISSDQSLSMTSNTILSADRPSRLSPDFMIGEEDDDLMDVALIGN</sequence>
<keyword id="KW-0002">3D-structure</keyword>
<keyword id="KW-0007">Acetylation</keyword>
<keyword id="KW-0010">Activator</keyword>
<keyword id="KW-0025">Alternative splicing</keyword>
<keyword id="KW-0903">Direct protein sequencing</keyword>
<keyword id="KW-0238">DNA-binding</keyword>
<keyword id="KW-0539">Nucleus</keyword>
<keyword id="KW-0597">Phosphoprotein</keyword>
<keyword id="KW-1267">Proteomics identification</keyword>
<keyword id="KW-1185">Reference proteome</keyword>
<keyword id="KW-0677">Repeat</keyword>
<keyword id="KW-0804">Transcription</keyword>
<keyword id="KW-0805">Transcription regulation</keyword>
<accession>Q15648</accession>
<accession>A2RRQ6</accession>
<accession>O43810</accession>
<accession>O75447</accession>
<accession>Q6P9H7</accession>
<accession>Q6PK58</accession>
<accession>Q9HD39</accession>
<gene>
    <name type="primary">MED1</name>
    <name type="synonym">ARC205</name>
    <name type="synonym">CRSP1</name>
    <name type="synonym">CRSP200</name>
    <name type="synonym">DRIP205</name>
    <name type="synonym">DRIP230</name>
    <name type="synonym">PBP</name>
    <name type="synonym">PPARBP</name>
    <name type="synonym">PPARGBP</name>
    <name type="synonym">RB18A</name>
    <name type="synonym">TRAP220</name>
    <name type="synonym">TRIP2</name>
</gene>
<evidence type="ECO:0000250" key="1">
    <source>
        <dbReference type="UniProtKB" id="Q925J9"/>
    </source>
</evidence>
<evidence type="ECO:0000256" key="2">
    <source>
        <dbReference type="SAM" id="MobiDB-lite"/>
    </source>
</evidence>
<evidence type="ECO:0000269" key="3">
    <source>
    </source>
</evidence>
<evidence type="ECO:0000269" key="4">
    <source>
    </source>
</evidence>
<evidence type="ECO:0000269" key="5">
    <source>
    </source>
</evidence>
<evidence type="ECO:0000269" key="6">
    <source>
    </source>
</evidence>
<evidence type="ECO:0000269" key="7">
    <source>
    </source>
</evidence>
<evidence type="ECO:0000269" key="8">
    <source>
    </source>
</evidence>
<evidence type="ECO:0000269" key="9">
    <source>
    </source>
</evidence>
<evidence type="ECO:0000269" key="10">
    <source>
    </source>
</evidence>
<evidence type="ECO:0000269" key="11">
    <source>
    </source>
</evidence>
<evidence type="ECO:0000269" key="12">
    <source>
    </source>
</evidence>
<evidence type="ECO:0000269" key="13">
    <source>
    </source>
</evidence>
<evidence type="ECO:0000269" key="14">
    <source>
    </source>
</evidence>
<evidence type="ECO:0000269" key="15">
    <source>
    </source>
</evidence>
<evidence type="ECO:0000269" key="16">
    <source>
    </source>
</evidence>
<evidence type="ECO:0000269" key="17">
    <source>
    </source>
</evidence>
<evidence type="ECO:0000269" key="18">
    <source>
    </source>
</evidence>
<evidence type="ECO:0000269" key="19">
    <source>
    </source>
</evidence>
<evidence type="ECO:0000269" key="20">
    <source>
    </source>
</evidence>
<evidence type="ECO:0000269" key="21">
    <source>
    </source>
</evidence>
<evidence type="ECO:0000269" key="22">
    <source>
    </source>
</evidence>
<evidence type="ECO:0000269" key="23">
    <source>
    </source>
</evidence>
<evidence type="ECO:0000269" key="24">
    <source>
    </source>
</evidence>
<evidence type="ECO:0000269" key="25">
    <source>
    </source>
</evidence>
<evidence type="ECO:0000269" key="26">
    <source>
    </source>
</evidence>
<evidence type="ECO:0000269" key="27">
    <source>
    </source>
</evidence>
<evidence type="ECO:0000303" key="28">
    <source>
    </source>
</evidence>
<evidence type="ECO:0000305" key="29"/>
<evidence type="ECO:0007744" key="30">
    <source>
    </source>
</evidence>
<evidence type="ECO:0007744" key="31">
    <source>
    </source>
</evidence>
<evidence type="ECO:0007744" key="32">
    <source>
    </source>
</evidence>
<evidence type="ECO:0007744" key="33">
    <source>
    </source>
</evidence>
<evidence type="ECO:0007744" key="34">
    <source>
    </source>
</evidence>
<evidence type="ECO:0007744" key="35">
    <source>
    </source>
</evidence>
<evidence type="ECO:0007744" key="36">
    <source>
    </source>
</evidence>
<evidence type="ECO:0007744" key="37">
    <source>
    </source>
</evidence>
<evidence type="ECO:0007744" key="38">
    <source>
    </source>
</evidence>
<evidence type="ECO:0007829" key="39">
    <source>
        <dbReference type="PDB" id="2O4J"/>
    </source>
</evidence>
<evidence type="ECO:0007829" key="40">
    <source>
        <dbReference type="PDB" id="6D94"/>
    </source>
</evidence>
<evidence type="ECO:0007829" key="41">
    <source>
        <dbReference type="PDB" id="7EMF"/>
    </source>
</evidence>
<name>MED1_HUMAN</name>
<comment type="function">
    <text evidence="6 11 12 13 14 15 17 18 19 21 24 27">Component of the Mediator complex, a coactivator involved in the regulated transcription of nearly all RNA polymerase II-dependent genes. Mediator functions as a bridge to convey information from gene-specific regulatory proteins to the basal RNA polymerase II transcription machinery. Mediator is recruited to promoters by direct interactions with regulatory proteins and serves as a scaffold for the assembly of a functional preinitiation complex with RNA polymerase II and the general transcription factors (PubMed:10406464, PubMed:11867769, PubMed:12037571, PubMed:12218053, PubMed:12556447, PubMed:14636573, PubMed:15340084, PubMed:15471764, PubMed:15989967, PubMed:16574658, PubMed:9653119). Acts as a coactivator for GATA1-mediated transcriptional activation during erythroid differentiation of K562 erythroleukemia cells (PubMed:24245781).</text>
</comment>
<comment type="subunit">
    <text evidence="1 3 4 5 6 7 8 9 10 11 12 13 14 15 16 17 18 19 21 22 23 24 25 26 27">Component of the Mediator complex, which is composed of MED1, MED4, MED6, MED7, MED8, MED9, MED10, MED11, MED12, MED13, MED13L, MED14, MED15, MED16, MED17, MED18, MED19, MED20, MED21, MED22, MED23, MED24, MED25, MED26, MED27, MED29, MED30, MED31, CCNC, CDK8 and CDC2L6/CDK11. The MED12, MED13, CCNC and CDK8 subunits form a distinct module termed the CDK8 module. Mediator containing the CDK8 module is less active than Mediator lacking this module in supporting transcriptional activation. Individual preparations of the Mediator complex lacking one or more distinct subunits have been variously termed ARC, CRSP, DRIP, PC2, SMCC and TRAP. This subunit specifically interacts with a number of nuclear receptors in a ligand-dependent fashion including AR, ESR1, ESR2, PPARA, PPARG, RORA, RXRA, RXRG, THRA, THRB and VDR. Interacts with CTNNB1, GABPA, GLI3, PPARGC1A and TP53. Interacts with YWHAH. Interacts with CLOCK; this interaction requires the presence of THRAP3 (By similarity). Interacts with GATA1 and CCAR1. Interacts with NR4A3 (By similarity). Interacts (via IBM motif) with PSIP1 (via IBD domain); phosphorylation increases its affinity for PSIP1 (PubMed:29997176). Interacts with USP22 (By similarity).</text>
</comment>
<comment type="interaction">
    <interactant intactId="EBI-394459">
        <id>Q15648</id>
    </interactant>
    <interactant intactId="EBI-78473">
        <id>P03372</id>
        <label>ESR1</label>
    </interactant>
    <organismsDiffer>false</organismsDiffer>
    <experiments>3</experiments>
</comment>
<comment type="interaction">
    <interactant intactId="EBI-394459">
        <id>Q15648</id>
    </interactant>
    <interactant intactId="EBI-3909284">
        <id>P15976</id>
        <label>GATA1</label>
    </interactant>
    <organismsDiffer>false</organismsDiffer>
    <experiments>6</experiments>
</comment>
<comment type="interaction">
    <interactant intactId="EBI-394459">
        <id>Q15648</id>
    </interactant>
    <interactant intactId="EBI-394678">
        <id>Q13503</id>
        <label>MED21</label>
    </interactant>
    <organismsDiffer>false</organismsDiffer>
    <experiments>7</experiments>
</comment>
<comment type="interaction">
    <interactant intactId="EBI-394459">
        <id>Q15648</id>
    </interactant>
    <interactant intactId="EBI-394632">
        <id>O43513</id>
        <label>MED7</label>
    </interactant>
    <organismsDiffer>false</organismsDiffer>
    <experiments>8</experiments>
</comment>
<comment type="interaction">
    <interactant intactId="EBI-394459">
        <id>Q15648</id>
    </interactant>
    <interactant intactId="EBI-413374">
        <id>P10276</id>
        <label>RARA</label>
    </interactant>
    <organismsDiffer>false</organismsDiffer>
    <experiments>6</experiments>
</comment>
<comment type="interaction">
    <interactant intactId="EBI-394459">
        <id>Q15648</id>
    </interactant>
    <interactant intactId="EBI-78598">
        <id>P19793</id>
        <label>RXRA</label>
    </interactant>
    <organismsDiffer>false</organismsDiffer>
    <experiments>6</experiments>
</comment>
<comment type="interaction">
    <interactant intactId="EBI-394459">
        <id>Q15648</id>
    </interactant>
    <interactant intactId="EBI-286285">
        <id>P10827</id>
        <label>THRA</label>
    </interactant>
    <organismsDiffer>false</organismsDiffer>
    <experiments>4</experiments>
</comment>
<comment type="interaction">
    <interactant intactId="EBI-394459">
        <id>Q15648</id>
    </interactant>
    <interactant intactId="EBI-286357">
        <id>P11473</id>
        <label>VDR</label>
    </interactant>
    <organismsDiffer>false</organismsDiffer>
    <experiments>4</experiments>
</comment>
<comment type="subcellular location">
    <subcellularLocation>
        <location evidence="18 20 21">Nucleus</location>
    </subcellularLocation>
    <text>A subset of the protein may enter the nucleolus subsequent to phosphorylation by MAPK1 or MAPK3.</text>
</comment>
<comment type="alternative products">
    <event type="alternative splicing"/>
    <isoform>
        <id>Q15648-1</id>
        <name>1</name>
        <sequence type="displayed"/>
    </isoform>
    <isoform>
        <id>Q15648-3</id>
        <name>2</name>
        <sequence type="described" ref="VSP_027906 VSP_027907"/>
    </isoform>
</comment>
<comment type="tissue specificity">
    <text evidence="26 27">Ubiquitously expressed.</text>
</comment>
<comment type="PTM">
    <text evidence="20 25">Phosphorylated by MAPK1 or MAPK3 during G2/M phase which may enhance protein stability and promote entry into the nucleolus (PubMed:16314496). Phosphorylation increases its interaction with PSIP1 (PubMed:29997176).</text>
</comment>
<comment type="similarity">
    <text evidence="29">Belongs to the Mediator complex subunit 1 family.</text>
</comment>
<comment type="sequence caution" evidence="29">
    <conflict type="frameshift">
        <sequence resource="EMBL-CDS" id="AAC39854"/>
    </conflict>
</comment>
<comment type="sequence caution" evidence="29">
    <conflict type="miscellaneous discrepancy">
        <sequence resource="EMBL-CDS" id="AAH06517"/>
    </conflict>
    <text>Contaminating sequence. Potential poly-A sequence.</text>
</comment>
<comment type="sequence caution" evidence="29">
    <conflict type="frameshift">
        <sequence resource="EMBL-CDS" id="CAA73867"/>
    </conflict>
</comment>